<protein>
    <recommendedName>
        <fullName evidence="26">Gamma-aminobutyric acid receptor subunit beta-3</fullName>
    </recommendedName>
    <alternativeName>
        <fullName evidence="23">GABA(A) receptor subunit beta-3</fullName>
        <shortName evidence="25">GABAAR subunit beta-3</shortName>
    </alternativeName>
</protein>
<name>GBRB3_HUMAN</name>
<comment type="function">
    <text evidence="1 2 5 7 8 9 10 12 14 15 20 21 22">Beta subunit of the heteropentameric ligand-gated chloride channel gated by gamma-aminobutyric acid (GABA), a major inhibitory neurotransmitter in the brain (PubMed:14993607, PubMed:18514161, PubMed:22243422, PubMed:22303015, PubMed:24909990, PubMed:26950270, PubMed:30602789). GABA-gated chloride channels, also named GABA(A) receptors (GABAAR), consist of five subunits arranged around a central pore and contain GABA active binding site(s) located at the alpha and beta subunit interface(s) (PubMed:24909990, PubMed:30140029, PubMed:30602789). GABAARs containing beta-3/GABRB3 subunit are found at both synaptic and extrasynaptic sites (By similarity). When activated by GABA, GABAARs selectively allow the flow of chloride anions across the cell membrane down their electrochemical gradient (PubMed:14993607, PubMed:22303015, PubMed:26950270, PubMed:30602789). Chloride influx into the postsynaptic neuron following GABAAR opening decreases the neuron ability to generate a new action potential, thereby reducing nerve transmission (PubMed:22303015, PubMed:26950270). GABAARs containing alpha-1 and beta-3 subunits exhibit synaptogenic activity; the gamma-2 subunit being necessary but not sufficient to induce rapid synaptic contacts formation (PubMed:25489750). Extrasynaptic beta-3 receptors contribute to the tonic GABAergic inhibition (By similarity). GABAARs containing alpha-1, beta-3 and epsilon subunits may also permit spontaneous chloride channel activity while preserving the structural information required for GABA-gated openings (By similarity). Beta-containing GABAARs can simultaneously bind GABA and histamine where histamine binds at the interface of two neighboring beta subunits, which may be involved in the regulation of sleep and wakefulness (PubMed:18281286, PubMed:24909990, PubMed:35355020). Plays an important role in somatosensation and in the production of antinociception (By similarity).</text>
</comment>
<comment type="catalytic activity">
    <reaction evidence="5 10 15 21">
        <text>chloride(in) = chloride(out)</text>
        <dbReference type="Rhea" id="RHEA:29823"/>
        <dbReference type="ChEBI" id="CHEBI:17996"/>
    </reaction>
</comment>
<comment type="activity regulation">
    <text evidence="7 22">Potentiated by histamine.</text>
</comment>
<comment type="subunit">
    <text evidence="1 2 5 7 8 9 10 12 20 21 22">Heteropentamer, formed by a combination of alpha (GABRA1-6), beta (GABRB1-3), gamma (GABRG1-3), delta (GABRD), epsilon (GABRE), rho (GABRR1-3), pi (GABRP) and theta (GABRQ) chains, each subunit exhibiting distinct physiological and pharmacological properties (PubMed:14993607, PubMed:18281286, PubMed:18514161, PubMed:22243422, PubMed:22303015, PubMed:24909990, PubMed:30140029, PubMed:30602789, PubMed:35355020). Can form functional homopentamers (in vitro) (PubMed:22303015). Interacts with UBQLN1 (By similarity). May interact with KIF21B (By similarity). Identified in a complex of 720 kDa composed of LHFPL4, NLGN2, GABRA1, GABRB2, GABRG2 and GABRB3 (By similarity). Interacts with LHFPL4 (By similarity). Interacts with GIT1; this interaction is required for synaptic GABRB3 surface stability and inhibitory synapse strength (By similarity).</text>
</comment>
<comment type="interaction">
    <interactant intactId="EBI-6258252">
        <id>P28472</id>
    </interactant>
    <interactant intactId="EBI-6258252">
        <id>P28472</id>
        <label>GABRB3</label>
    </interactant>
    <organismsDiffer>false</organismsDiffer>
    <experiments>5</experiments>
</comment>
<comment type="subcellular location">
    <subcellularLocation>
        <location>Postsynaptic cell membrane</location>
        <topology evidence="12 22 34">Multi-pass membrane protein</topology>
    </subcellularLocation>
    <subcellularLocation>
        <location evidence="7 8 9 10 12 15">Cell membrane</location>
        <topology evidence="12 22 34">Multi-pass membrane protein</topology>
    </subcellularLocation>
    <subcellularLocation>
        <location evidence="1">Cytoplasmic vesicle membrane</location>
    </subcellularLocation>
</comment>
<comment type="alternative products">
    <event type="alternative splicing"/>
    <isoform>
        <id>P28472-1</id>
        <name>1</name>
        <sequence type="displayed"/>
    </isoform>
    <isoform>
        <id>P28472-2</id>
        <name>2</name>
        <sequence type="described" ref="VSP_000088"/>
    </isoform>
    <isoform>
        <id>P28472-3</id>
        <name>3</name>
        <sequence type="described" ref="VSP_046126"/>
    </isoform>
    <isoform>
        <id>P28472-4</id>
        <name>4</name>
        <sequence type="described" ref="VSP_046676"/>
    </isoform>
    <text>Isoforms differ in their signal region.</text>
</comment>
<comment type="domain">
    <text evidence="22">GABAARs subunits share a common topological structure: a peptide sequence made up of a long extracellular N-terminal, four transmembrane domains, intracellular or cytoplasmic domain located between the third and the fourth transmembrane domains.</text>
</comment>
<comment type="polymorphism">
    <text>GABRB3 variants may be associated with insomnia, a condition of inability to initiate or maintain sleep [MIM:137192].</text>
</comment>
<comment type="disease" evidence="8 10">
    <disease id="DI-00300">
        <name>Epilepsy, childhood absence 5</name>
        <acronym>ECA5</acronym>
        <description>A subtype of idiopathic generalized epilepsy characterized by an onset at age 6-7 years, frequent absence seizures (several per day) and bilateral, synchronous, symmetric 3-Hz spike waves on EEG. Tonic-clonic seizures often develop in adolescence. Absence seizures may either remit or persist into adulthood.</description>
        <dbReference type="MIM" id="612269"/>
    </disease>
    <text>Disease susceptibility is associated with variants affecting the gene represented in this entry.</text>
</comment>
<comment type="disease" evidence="11 13 15 16 17 18">
    <disease id="DI-04835">
        <name>Developmental and epileptic encephalopathy 43</name>
        <acronym>DEE43</acronym>
        <description>A form of epileptic encephalopathy, a heterogeneous group of severe early-onset epilepsies characterized by refractory seizures, neurodevelopmental impairment, and poor prognosis. Development is normal prior to seizure onset, after which cognitive and motor delays become apparent. DEE43 inheritance is autosomal dominant.</description>
        <dbReference type="MIM" id="617113"/>
    </disease>
    <text>The disease is caused by variants affecting the gene represented in this entry.</text>
</comment>
<comment type="similarity">
    <text evidence="27">Belongs to the ligand-gated ion channel (TC 1.A.9) family. Gamma-aminobutyric acid receptor (TC 1.A.9.5) subfamily. GABRB3 sub-subfamily.</text>
</comment>
<comment type="online information" name="Protein Spotlight">
    <link uri="https://www.proteinspotlight.org/back_issues/056"/>
    <text>Forbidden fruit - Issue 56 of March 2005</text>
</comment>
<dbReference type="EMBL" id="M82919">
    <property type="protein sequence ID" value="AAA52511.1"/>
    <property type="molecule type" value="mRNA"/>
</dbReference>
<dbReference type="EMBL" id="AK295167">
    <property type="protein sequence ID" value="BAH11997.1"/>
    <property type="molecule type" value="mRNA"/>
</dbReference>
<dbReference type="EMBL" id="AK302822">
    <property type="protein sequence ID" value="BAH13811.1"/>
    <property type="molecule type" value="mRNA"/>
</dbReference>
<dbReference type="EMBL" id="AC009878">
    <property type="status" value="NOT_ANNOTATED_CDS"/>
    <property type="molecule type" value="Genomic_DNA"/>
</dbReference>
<dbReference type="EMBL" id="AC011196">
    <property type="status" value="NOT_ANNOTATED_CDS"/>
    <property type="molecule type" value="Genomic_DNA"/>
</dbReference>
<dbReference type="EMBL" id="AC104569">
    <property type="status" value="NOT_ANNOTATED_CDS"/>
    <property type="molecule type" value="Genomic_DNA"/>
</dbReference>
<dbReference type="EMBL" id="AC127511">
    <property type="status" value="NOT_ANNOTATED_CDS"/>
    <property type="molecule type" value="Genomic_DNA"/>
</dbReference>
<dbReference type="EMBL" id="AC135999">
    <property type="status" value="NOT_ANNOTATED_CDS"/>
    <property type="molecule type" value="Genomic_DNA"/>
</dbReference>
<dbReference type="EMBL" id="AC145167">
    <property type="status" value="NOT_ANNOTATED_CDS"/>
    <property type="molecule type" value="Genomic_DNA"/>
</dbReference>
<dbReference type="EMBL" id="AC145196">
    <property type="status" value="NOT_ANNOTATED_CDS"/>
    <property type="molecule type" value="Genomic_DNA"/>
</dbReference>
<dbReference type="EMBL" id="EU606048">
    <property type="status" value="NOT_ANNOTATED_CDS"/>
    <property type="molecule type" value="Genomic_DNA"/>
</dbReference>
<dbReference type="EMBL" id="CH471151">
    <property type="protein sequence ID" value="EAW57655.1"/>
    <property type="molecule type" value="Genomic_DNA"/>
</dbReference>
<dbReference type="EMBL" id="BC010641">
    <property type="protein sequence ID" value="AAH10641.1"/>
    <property type="molecule type" value="mRNA"/>
</dbReference>
<dbReference type="EMBL" id="L04311">
    <property type="protein sequence ID" value="AAA52508.1"/>
    <property type="molecule type" value="Genomic_DNA"/>
</dbReference>
<dbReference type="EMBL" id="L04311">
    <property type="protein sequence ID" value="AAA52507.1"/>
    <property type="molecule type" value="Genomic_DNA"/>
</dbReference>
<dbReference type="CCDS" id="CCDS10018.1">
    <molecule id="P28472-2"/>
</dbReference>
<dbReference type="CCDS" id="CCDS10019.1">
    <molecule id="P28472-1"/>
</dbReference>
<dbReference type="CCDS" id="CCDS53920.1">
    <molecule id="P28472-4"/>
</dbReference>
<dbReference type="CCDS" id="CCDS53921.1">
    <molecule id="P28472-3"/>
</dbReference>
<dbReference type="PIR" id="A55275">
    <property type="entry name" value="A55275"/>
</dbReference>
<dbReference type="PIR" id="B45468">
    <property type="entry name" value="B45468"/>
</dbReference>
<dbReference type="RefSeq" id="NP_000805.1">
    <molecule id="P28472-1"/>
    <property type="nucleotide sequence ID" value="NM_000814.6"/>
</dbReference>
<dbReference type="RefSeq" id="NP_001178249.1">
    <molecule id="P28472-4"/>
    <property type="nucleotide sequence ID" value="NM_001191320.2"/>
</dbReference>
<dbReference type="RefSeq" id="NP_001178250.1">
    <molecule id="P28472-3"/>
    <property type="nucleotide sequence ID" value="NM_001191321.3"/>
</dbReference>
<dbReference type="RefSeq" id="NP_001265560.1">
    <molecule id="P28472-4"/>
    <property type="nucleotide sequence ID" value="NM_001278631.2"/>
</dbReference>
<dbReference type="RefSeq" id="NP_068712.1">
    <molecule id="P28472-2"/>
    <property type="nucleotide sequence ID" value="NM_021912.5"/>
</dbReference>
<dbReference type="PDB" id="4COF">
    <property type="method" value="X-ray"/>
    <property type="resolution" value="2.97 A"/>
    <property type="chains" value="A/B/C/D/E=26-332, A/B/C/D/E=447-473"/>
</dbReference>
<dbReference type="PDB" id="5O8F">
    <property type="method" value="X-ray"/>
    <property type="resolution" value="3.20 A"/>
    <property type="chains" value="A/B/C/D/E=26-246"/>
</dbReference>
<dbReference type="PDB" id="5OJM">
    <property type="method" value="X-ray"/>
    <property type="resolution" value="3.30 A"/>
    <property type="chains" value="A/B/C/D/E=26-242"/>
</dbReference>
<dbReference type="PDB" id="6A96">
    <property type="method" value="EM"/>
    <property type="resolution" value="3.51 A"/>
    <property type="chains" value="B/C/D/E=1-332"/>
</dbReference>
<dbReference type="PDB" id="6HUG">
    <property type="method" value="EM"/>
    <property type="resolution" value="3.10 A"/>
    <property type="chains" value="B/E=26-473"/>
</dbReference>
<dbReference type="PDB" id="6HUJ">
    <property type="method" value="EM"/>
    <property type="resolution" value="3.04 A"/>
    <property type="chains" value="B/E=26-473"/>
</dbReference>
<dbReference type="PDB" id="6HUK">
    <property type="method" value="EM"/>
    <property type="resolution" value="3.69 A"/>
    <property type="chains" value="B/E=26-473"/>
</dbReference>
<dbReference type="PDB" id="6HUO">
    <property type="method" value="EM"/>
    <property type="resolution" value="3.26 A"/>
    <property type="chains" value="B/E=26-473"/>
</dbReference>
<dbReference type="PDB" id="6HUP">
    <property type="method" value="EM"/>
    <property type="resolution" value="3.58 A"/>
    <property type="chains" value="B/E=26-473"/>
</dbReference>
<dbReference type="PDB" id="6I53">
    <property type="method" value="EM"/>
    <property type="resolution" value="3.20 A"/>
    <property type="chains" value="B/E=26-473"/>
</dbReference>
<dbReference type="PDB" id="6QFA">
    <property type="method" value="EM"/>
    <property type="resolution" value="2.49 A"/>
    <property type="chains" value="A/B/C/D/E=26-332, A/B/C/D/E=447-473"/>
</dbReference>
<dbReference type="PDB" id="7PBD">
    <property type="method" value="EM"/>
    <property type="resolution" value="3.04 A"/>
    <property type="chains" value="B/C/E=33-332, B/C/E=447-473"/>
</dbReference>
<dbReference type="PDB" id="7PBZ">
    <property type="method" value="EM"/>
    <property type="resolution" value="2.79 A"/>
    <property type="chains" value="B/C/E=26-332, B/C/E=447-473"/>
</dbReference>
<dbReference type="PDB" id="7PC0">
    <property type="method" value="EM"/>
    <property type="resolution" value="3.00 A"/>
    <property type="chains" value="B/C/E=33-332, B/C/E=447-473"/>
</dbReference>
<dbReference type="PDB" id="7QN5">
    <property type="method" value="EM"/>
    <property type="resolution" value="2.50 A"/>
    <property type="chains" value="B/C/D=1-473"/>
</dbReference>
<dbReference type="PDB" id="7QN6">
    <property type="method" value="EM"/>
    <property type="resolution" value="2.90 A"/>
    <property type="chains" value="A/B/C/D=1-473"/>
</dbReference>
<dbReference type="PDB" id="7QN7">
    <property type="method" value="EM"/>
    <property type="resolution" value="3.00 A"/>
    <property type="chains" value="B/C/D=1-473"/>
</dbReference>
<dbReference type="PDB" id="7QN8">
    <property type="method" value="EM"/>
    <property type="resolution" value="3.10 A"/>
    <property type="chains" value="A/B/C/D=1-473"/>
</dbReference>
<dbReference type="PDB" id="7QN9">
    <property type="method" value="EM"/>
    <property type="resolution" value="2.90 A"/>
    <property type="chains" value="B/C/D=1-473"/>
</dbReference>
<dbReference type="PDB" id="7QNA">
    <property type="method" value="EM"/>
    <property type="resolution" value="3.00 A"/>
    <property type="chains" value="B/D/E=1-473"/>
</dbReference>
<dbReference type="PDB" id="7QNB">
    <property type="method" value="EM"/>
    <property type="resolution" value="3.10 A"/>
    <property type="chains" value="B/D/E=1-473"/>
</dbReference>
<dbReference type="PDB" id="7QNC">
    <property type="method" value="EM"/>
    <property type="resolution" value="2.90 A"/>
    <property type="chains" value="B/C/D=1-473"/>
</dbReference>
<dbReference type="PDB" id="7QND">
    <property type="method" value="EM"/>
    <property type="resolution" value="3.40 A"/>
    <property type="chains" value="A/B/C/D=1-473"/>
</dbReference>
<dbReference type="PDB" id="7QNE">
    <property type="method" value="EM"/>
    <property type="resolution" value="2.70 A"/>
    <property type="chains" value="B/E=1-473"/>
</dbReference>
<dbReference type="PDB" id="8PVB">
    <property type="method" value="EM"/>
    <property type="resolution" value="3.60 A"/>
    <property type="chains" value="A=26-332"/>
</dbReference>
<dbReference type="PDB" id="9CSB">
    <property type="method" value="EM"/>
    <property type="resolution" value="3.34 A"/>
    <property type="chains" value="A=26-473"/>
</dbReference>
<dbReference type="PDB" id="9CTJ">
    <property type="method" value="EM"/>
    <property type="resolution" value="3.74 A"/>
    <property type="chains" value="C=26-473"/>
</dbReference>
<dbReference type="PDB" id="9CX7">
    <property type="method" value="EM"/>
    <property type="resolution" value="3.30 A"/>
    <property type="chains" value="A/D=26-473"/>
</dbReference>
<dbReference type="PDB" id="9CXA">
    <property type="method" value="EM"/>
    <property type="resolution" value="3.04 A"/>
    <property type="chains" value="C=1-473"/>
</dbReference>
<dbReference type="PDB" id="9CXC">
    <property type="method" value="EM"/>
    <property type="resolution" value="3.30 A"/>
    <property type="chains" value="A=26-473"/>
</dbReference>
<dbReference type="PDB" id="9EQG">
    <property type="method" value="EM"/>
    <property type="resolution" value="2.40 A"/>
    <property type="chains" value="B/E=1-473"/>
</dbReference>
<dbReference type="PDBsum" id="4COF"/>
<dbReference type="PDBsum" id="5O8F"/>
<dbReference type="PDBsum" id="5OJM"/>
<dbReference type="PDBsum" id="6A96"/>
<dbReference type="PDBsum" id="6HUG"/>
<dbReference type="PDBsum" id="6HUJ"/>
<dbReference type="PDBsum" id="6HUK"/>
<dbReference type="PDBsum" id="6HUO"/>
<dbReference type="PDBsum" id="6HUP"/>
<dbReference type="PDBsum" id="6I53"/>
<dbReference type="PDBsum" id="6QFA"/>
<dbReference type="PDBsum" id="7PBD"/>
<dbReference type="PDBsum" id="7PBZ"/>
<dbReference type="PDBsum" id="7PC0"/>
<dbReference type="PDBsum" id="7QN5"/>
<dbReference type="PDBsum" id="7QN6"/>
<dbReference type="PDBsum" id="7QN7"/>
<dbReference type="PDBsum" id="7QN8"/>
<dbReference type="PDBsum" id="7QN9"/>
<dbReference type="PDBsum" id="7QNA"/>
<dbReference type="PDBsum" id="7QNB"/>
<dbReference type="PDBsum" id="7QNC"/>
<dbReference type="PDBsum" id="7QND"/>
<dbReference type="PDBsum" id="7QNE"/>
<dbReference type="PDBsum" id="8PVB"/>
<dbReference type="PDBsum" id="9CSB"/>
<dbReference type="PDBsum" id="9CTJ"/>
<dbReference type="PDBsum" id="9CX7"/>
<dbReference type="PDBsum" id="9CXA"/>
<dbReference type="PDBsum" id="9CXC"/>
<dbReference type="PDBsum" id="9EQG"/>
<dbReference type="EMDB" id="EMD-0275"/>
<dbReference type="EMDB" id="EMD-0279"/>
<dbReference type="EMDB" id="EMD-0280"/>
<dbReference type="EMDB" id="EMD-0282"/>
<dbReference type="EMDB" id="EMD-0283"/>
<dbReference type="EMDB" id="EMD-11610"/>
<dbReference type="EMDB" id="EMD-11657"/>
<dbReference type="EMDB" id="EMD-13290"/>
<dbReference type="EMDB" id="EMD-13314"/>
<dbReference type="EMDB" id="EMD-13315"/>
<dbReference type="EMDB" id="EMD-14067"/>
<dbReference type="EMDB" id="EMD-14068"/>
<dbReference type="EMDB" id="EMD-14069"/>
<dbReference type="EMDB" id="EMD-14070"/>
<dbReference type="EMDB" id="EMD-14071"/>
<dbReference type="EMDB" id="EMD-14072"/>
<dbReference type="EMDB" id="EMD-14073"/>
<dbReference type="EMDB" id="EMD-14074"/>
<dbReference type="EMDB" id="EMD-14075"/>
<dbReference type="EMDB" id="EMD-14076"/>
<dbReference type="EMDB" id="EMD-17960"/>
<dbReference type="EMDB" id="EMD-19907"/>
<dbReference type="EMDB" id="EMD-4411"/>
<dbReference type="EMDB" id="EMD-4542"/>
<dbReference type="EMDB" id="EMD-45890"/>
<dbReference type="EMDB" id="EMD-45908"/>
<dbReference type="EMDB" id="EMD-45980"/>
<dbReference type="EMDB" id="EMD-45983"/>
<dbReference type="EMDB" id="EMD-45985"/>
<dbReference type="EMDB" id="EMD-6998"/>
<dbReference type="SMR" id="P28472"/>
<dbReference type="BioGRID" id="108836">
    <property type="interactions" value="13"/>
</dbReference>
<dbReference type="ComplexPortal" id="CPX-2164">
    <property type="entry name" value="GABA-A receptor, alpha6-beta3-gamma2"/>
</dbReference>
<dbReference type="ComplexPortal" id="CPX-2166">
    <property type="entry name" value="GABA-A receptor, alpha3-beta3-gamma2"/>
</dbReference>
<dbReference type="ComplexPortal" id="CPX-2167">
    <property type="entry name" value="GABA-A receptor, alpha1-beta3-gamma2"/>
</dbReference>
<dbReference type="ComplexPortal" id="CPX-2168">
    <property type="entry name" value="GABA-A receptor, alpha5-beta3-gamma2"/>
</dbReference>
<dbReference type="ComplexPortal" id="CPX-2174">
    <property type="entry name" value="GABA-A receptor, alpha2-beta3-gamma2"/>
</dbReference>
<dbReference type="ComplexPortal" id="CPX-2951">
    <property type="entry name" value="GABA-A receptor, alpha-6/beta-3/delta"/>
</dbReference>
<dbReference type="ComplexPortal" id="CPX-2954">
    <property type="entry name" value="GABA-A receptor, alpha4-beta3-delta"/>
</dbReference>
<dbReference type="ComplexPortal" id="CPX-8571">
    <property type="entry name" value="GABA-A receptor, alpha4-beta3-gamma2"/>
</dbReference>
<dbReference type="ComplexPortal" id="CPX-8573">
    <property type="entry name" value="GABA-A receptor, alpha3-beta3-theta"/>
</dbReference>
<dbReference type="ComplexPortal" id="CPX-8575">
    <property type="entry name" value="GABA-A receptor, alpha5-beta3-gamma3"/>
</dbReference>
<dbReference type="ComplexPortal" id="CPX-8579">
    <property type="entry name" value="GABA-A receptor, alpha3-beta3-gamma3"/>
</dbReference>
<dbReference type="ComplexPortal" id="CPX-8701">
    <property type="entry name" value="GABA-A receptor, alpha-5/beta-3 complex"/>
</dbReference>
<dbReference type="ComplexPortal" id="CPX-8729">
    <property type="entry name" value="GABA-A receptor, alpha1-beta3 complex"/>
</dbReference>
<dbReference type="ComplexPortal" id="CPX-8731">
    <property type="entry name" value="GABA-A receptor, beta3-gamma2 complex"/>
</dbReference>
<dbReference type="ComplexPortal" id="CPX-8732">
    <property type="entry name" value="GABA-A receptor, beta3-delta complex"/>
</dbReference>
<dbReference type="DIP" id="DIP-61029N"/>
<dbReference type="FunCoup" id="P28472">
    <property type="interactions" value="897"/>
</dbReference>
<dbReference type="IntAct" id="P28472">
    <property type="interactions" value="15"/>
</dbReference>
<dbReference type="STRING" id="9606.ENSP00000308725"/>
<dbReference type="BindingDB" id="P28472"/>
<dbReference type="ChEMBL" id="CHEMBL1847"/>
<dbReference type="DrugBank" id="DB12537">
    <property type="generic name" value="1,2-Benzodiazepine"/>
</dbReference>
<dbReference type="DrugBank" id="DB00546">
    <property type="generic name" value="Adinazolam"/>
</dbReference>
<dbReference type="DrugBank" id="DB00404">
    <property type="generic name" value="Alprazolam"/>
</dbReference>
<dbReference type="DrugBank" id="DB00543">
    <property type="generic name" value="Amoxapine"/>
</dbReference>
<dbReference type="DrugBank" id="DB11901">
    <property type="generic name" value="Apalutamide"/>
</dbReference>
<dbReference type="DrugBank" id="DB14719">
    <property type="generic name" value="Bentazepam"/>
</dbReference>
<dbReference type="DrugBank" id="DB11859">
    <property type="generic name" value="Brexanolone"/>
</dbReference>
<dbReference type="DrugBank" id="DB01558">
    <property type="generic name" value="Bromazepam"/>
</dbReference>
<dbReference type="DrugBank" id="DB09017">
    <property type="generic name" value="Brotizolam"/>
</dbReference>
<dbReference type="DrugBank" id="DB00237">
    <property type="generic name" value="Butabarbital"/>
</dbReference>
<dbReference type="DrugBank" id="DB00241">
    <property type="generic name" value="Butalbital"/>
</dbReference>
<dbReference type="DrugBank" id="DB01489">
    <property type="generic name" value="Camazepam"/>
</dbReference>
<dbReference type="DrugBank" id="DB00475">
    <property type="generic name" value="Chlordiazepoxide"/>
</dbReference>
<dbReference type="DrugBank" id="DB14715">
    <property type="generic name" value="Cinazepam"/>
</dbReference>
<dbReference type="DrugBank" id="DB01594">
    <property type="generic name" value="Cinolazepam"/>
</dbReference>
<dbReference type="DrugBank" id="DB00349">
    <property type="generic name" value="Clobazam"/>
</dbReference>
<dbReference type="DrugBank" id="DB01068">
    <property type="generic name" value="Clonazepam"/>
</dbReference>
<dbReference type="DrugBank" id="DB00628">
    <property type="generic name" value="Clorazepic acid"/>
</dbReference>
<dbReference type="DrugBank" id="DB01559">
    <property type="generic name" value="Clotiazepam"/>
</dbReference>
<dbReference type="DrugBank" id="DB01553">
    <property type="generic name" value="Cloxazolam"/>
</dbReference>
<dbReference type="DrugBank" id="DB01511">
    <property type="generic name" value="Delorazepam"/>
</dbReference>
<dbReference type="DrugBank" id="DB01189">
    <property type="generic name" value="Desflurane"/>
</dbReference>
<dbReference type="DrugBank" id="DB00829">
    <property type="generic name" value="Diazepam"/>
</dbReference>
<dbReference type="DrugBank" id="DB13837">
    <property type="generic name" value="Doxefazepam"/>
</dbReference>
<dbReference type="DrugBank" id="DB00228">
    <property type="generic name" value="Enflurane"/>
</dbReference>
<dbReference type="DrugBank" id="DB01215">
    <property type="generic name" value="Estazolam"/>
</dbReference>
<dbReference type="DrugBank" id="DB00402">
    <property type="generic name" value="Eszopiclone"/>
</dbReference>
<dbReference type="DrugBank" id="DB00898">
    <property type="generic name" value="Ethanol"/>
</dbReference>
<dbReference type="DrugBank" id="DB00189">
    <property type="generic name" value="Ethchlorvynol"/>
</dbReference>
<dbReference type="DrugBank" id="DB01545">
    <property type="generic name" value="Ethyl loflazepate"/>
</dbReference>
<dbReference type="DrugBank" id="DB09166">
    <property type="generic name" value="Etizolam"/>
</dbReference>
<dbReference type="DrugBank" id="DB00292">
    <property type="generic name" value="Etomidate"/>
</dbReference>
<dbReference type="DrugBank" id="DB01567">
    <property type="generic name" value="Fludiazepam"/>
</dbReference>
<dbReference type="DrugBank" id="DB01205">
    <property type="generic name" value="Flumazenil"/>
</dbReference>
<dbReference type="DrugBank" id="DB01544">
    <property type="generic name" value="Flunitrazepam"/>
</dbReference>
<dbReference type="DrugBank" id="DB00690">
    <property type="generic name" value="Flurazepam"/>
</dbReference>
<dbReference type="DrugBank" id="DB06716">
    <property type="generic name" value="Fospropofol"/>
</dbReference>
<dbReference type="DrugBank" id="DB05087">
    <property type="generic name" value="Ganaxolone"/>
</dbReference>
<dbReference type="DrugBank" id="DB01437">
    <property type="generic name" value="Glutethimide"/>
</dbReference>
<dbReference type="DrugBank" id="DB00801">
    <property type="generic name" value="Halazepam"/>
</dbReference>
<dbReference type="DrugBank" id="DB01159">
    <property type="generic name" value="Halothane"/>
</dbReference>
<dbReference type="DrugBank" id="DB00753">
    <property type="generic name" value="Isoflurane"/>
</dbReference>
<dbReference type="DrugBank" id="DB01587">
    <property type="generic name" value="Ketazolam"/>
</dbReference>
<dbReference type="DrugBank" id="DB00555">
    <property type="generic name" value="Lamotrigine"/>
</dbReference>
<dbReference type="DrugBank" id="DB00431">
    <property type="generic name" value="Lindane"/>
</dbReference>
<dbReference type="DrugBank" id="DB13643">
    <property type="generic name" value="Loprazolam"/>
</dbReference>
<dbReference type="DrugBank" id="DB00186">
    <property type="generic name" value="Lorazepam"/>
</dbReference>
<dbReference type="DrugBank" id="DB13872">
    <property type="generic name" value="Lormetazepam"/>
</dbReference>
<dbReference type="DrugBank" id="DB13437">
    <property type="generic name" value="Medazepam"/>
</dbReference>
<dbReference type="DrugBank" id="DB00603">
    <property type="generic name" value="Medroxyprogesterone acetate"/>
</dbReference>
<dbReference type="DrugBank" id="DB01043">
    <property type="generic name" value="Memantine"/>
</dbReference>
<dbReference type="DrugBank" id="DB00371">
    <property type="generic name" value="Meprobamate"/>
</dbReference>
<dbReference type="DrugBank" id="DB00463">
    <property type="generic name" value="Metharbital"/>
</dbReference>
<dbReference type="DrugBank" id="DB01028">
    <property type="generic name" value="Methoxyflurane"/>
</dbReference>
<dbReference type="DrugBank" id="DB01107">
    <property type="generic name" value="Methyprylon"/>
</dbReference>
<dbReference type="DrugBank" id="DB15489">
    <property type="generic name" value="Mexazolam"/>
</dbReference>
<dbReference type="DrugBank" id="DB00683">
    <property type="generic name" value="Midazolam"/>
</dbReference>
<dbReference type="DrugBank" id="DB12458">
    <property type="generic name" value="Muscimol"/>
</dbReference>
<dbReference type="DrugBank" id="DB01595">
    <property type="generic name" value="Nitrazepam"/>
</dbReference>
<dbReference type="DrugBank" id="DB14028">
    <property type="generic name" value="Nordazepam"/>
</dbReference>
<dbReference type="DrugBank" id="DB00842">
    <property type="generic name" value="Oxazepam"/>
</dbReference>
<dbReference type="DrugBank" id="DB14672">
    <property type="generic name" value="Oxazepam acetate"/>
</dbReference>
<dbReference type="DrugBank" id="DB00312">
    <property type="generic name" value="Pentobarbital"/>
</dbReference>
<dbReference type="DrugBank" id="DB00252">
    <property type="generic name" value="Phenytoin"/>
</dbReference>
<dbReference type="DrugBank" id="DB13335">
    <property type="generic name" value="Pinazepam"/>
</dbReference>
<dbReference type="DrugBank" id="DB00592">
    <property type="generic name" value="Piperazine"/>
</dbReference>
<dbReference type="DrugBank" id="DB01708">
    <property type="generic name" value="Prasterone"/>
</dbReference>
<dbReference type="DrugBank" id="DB01588">
    <property type="generic name" value="Prazepam"/>
</dbReference>
<dbReference type="DrugBank" id="DB00794">
    <property type="generic name" value="Primidone"/>
</dbReference>
<dbReference type="DrugBank" id="DB00818">
    <property type="generic name" value="Propofol"/>
</dbReference>
<dbReference type="DrugBank" id="DB01589">
    <property type="generic name" value="Quazepam"/>
</dbReference>
<dbReference type="DrugBank" id="DB12404">
    <property type="generic name" value="Remimazolam"/>
</dbReference>
<dbReference type="DrugBank" id="DB01236">
    <property type="generic name" value="Sevoflurane"/>
</dbReference>
<dbReference type="DrugBank" id="DB09118">
    <property type="generic name" value="Stiripentol"/>
</dbReference>
<dbReference type="DrugBank" id="DB00306">
    <property type="generic name" value="Talbutal"/>
</dbReference>
<dbReference type="DrugBank" id="DB01956">
    <property type="generic name" value="Taurine"/>
</dbReference>
<dbReference type="DrugBank" id="DB00231">
    <property type="generic name" value="Temazepam"/>
</dbReference>
<dbReference type="DrugBank" id="DB11582">
    <property type="generic name" value="Thiocolchicoside"/>
</dbReference>
<dbReference type="DrugBank" id="DB00897">
    <property type="generic name" value="Triazolam"/>
</dbReference>
<dbReference type="DrugBank" id="DB15490">
    <property type="generic name" value="Zuranolone"/>
</dbReference>
<dbReference type="DrugCentral" id="P28472"/>
<dbReference type="GuidetoPHARMACOLOGY" id="412"/>
<dbReference type="TCDB" id="1.A.9.5.4">
    <property type="family name" value="the neurotransmitter receptor, cys loop, ligand-gated ion channel (lic) family"/>
</dbReference>
<dbReference type="GlyCosmos" id="P28472">
    <property type="glycosylation" value="3 sites, No reported glycans"/>
</dbReference>
<dbReference type="GlyGen" id="P28472">
    <property type="glycosylation" value="3 sites, 1 N-linked glycan (1 site)"/>
</dbReference>
<dbReference type="iPTMnet" id="P28472"/>
<dbReference type="PhosphoSitePlus" id="P28472"/>
<dbReference type="BioMuta" id="GABRB3"/>
<dbReference type="DMDM" id="120773"/>
<dbReference type="jPOST" id="P28472"/>
<dbReference type="MassIVE" id="P28472"/>
<dbReference type="PaxDb" id="9606-ENSP00000308725"/>
<dbReference type="PeptideAtlas" id="P28472"/>
<dbReference type="ProteomicsDB" id="26235"/>
<dbReference type="ProteomicsDB" id="43749"/>
<dbReference type="ProteomicsDB" id="54485">
    <molecule id="P28472-1"/>
</dbReference>
<dbReference type="ProteomicsDB" id="54486">
    <molecule id="P28472-2"/>
</dbReference>
<dbReference type="ABCD" id="P28472">
    <property type="antibodies" value="3 sequenced antibodies"/>
</dbReference>
<dbReference type="Antibodypedia" id="22323">
    <property type="antibodies" value="327 antibodies from 38 providers"/>
</dbReference>
<dbReference type="DNASU" id="2562"/>
<dbReference type="Ensembl" id="ENST00000299267.9">
    <molecule id="P28472-2"/>
    <property type="protein sequence ID" value="ENSP00000299267.4"/>
    <property type="gene ID" value="ENSG00000166206.16"/>
</dbReference>
<dbReference type="Ensembl" id="ENST00000311550.10">
    <molecule id="P28472-1"/>
    <property type="protein sequence ID" value="ENSP00000308725.5"/>
    <property type="gene ID" value="ENSG00000166206.16"/>
</dbReference>
<dbReference type="Ensembl" id="ENST00000400188.7">
    <molecule id="P28472-3"/>
    <property type="protein sequence ID" value="ENSP00000383049.3"/>
    <property type="gene ID" value="ENSG00000166206.16"/>
</dbReference>
<dbReference type="Ensembl" id="ENST00000545868.4">
    <molecule id="P28472-4"/>
    <property type="protein sequence ID" value="ENSP00000439169.1"/>
    <property type="gene ID" value="ENSG00000166206.16"/>
</dbReference>
<dbReference type="Ensembl" id="ENST00000636466.1">
    <molecule id="P28472-4"/>
    <property type="protein sequence ID" value="ENSP00000489768.1"/>
    <property type="gene ID" value="ENSG00000166206.16"/>
</dbReference>
<dbReference type="GeneID" id="2562"/>
<dbReference type="KEGG" id="hsa:2562"/>
<dbReference type="MANE-Select" id="ENST00000311550.10">
    <property type="protein sequence ID" value="ENSP00000308725.5"/>
    <property type="RefSeq nucleotide sequence ID" value="NM_000814.6"/>
    <property type="RefSeq protein sequence ID" value="NP_000805.1"/>
</dbReference>
<dbReference type="UCSC" id="uc001zaz.5">
    <molecule id="P28472-1"/>
    <property type="organism name" value="human"/>
</dbReference>
<dbReference type="AGR" id="HGNC:4083"/>
<dbReference type="CTD" id="2562"/>
<dbReference type="DisGeNET" id="2562"/>
<dbReference type="GeneCards" id="GABRB3"/>
<dbReference type="GeneReviews" id="GABRB3"/>
<dbReference type="HGNC" id="HGNC:4083">
    <property type="gene designation" value="GABRB3"/>
</dbReference>
<dbReference type="HPA" id="ENSG00000166206">
    <property type="expression patterns" value="Tissue enhanced (brain, retina)"/>
</dbReference>
<dbReference type="MalaCards" id="GABRB3"/>
<dbReference type="MIM" id="137192">
    <property type="type" value="gene+phenotype"/>
</dbReference>
<dbReference type="MIM" id="612269">
    <property type="type" value="phenotype"/>
</dbReference>
<dbReference type="MIM" id="617113">
    <property type="type" value="phenotype"/>
</dbReference>
<dbReference type="neXtProt" id="NX_P28472"/>
<dbReference type="OpenTargets" id="ENSG00000166206"/>
<dbReference type="Orphanet" id="64280">
    <property type="disease" value="Childhood absence epilepsy"/>
</dbReference>
<dbReference type="Orphanet" id="2382">
    <property type="disease" value="Lennox-Gastaut syndrome"/>
</dbReference>
<dbReference type="PharmGKB" id="PA28497"/>
<dbReference type="VEuPathDB" id="HostDB:ENSG00000166206"/>
<dbReference type="eggNOG" id="KOG3643">
    <property type="taxonomic scope" value="Eukaryota"/>
</dbReference>
<dbReference type="GeneTree" id="ENSGT00940000154713"/>
<dbReference type="HOGENOM" id="CLU_010920_0_2_1"/>
<dbReference type="InParanoid" id="P28472"/>
<dbReference type="OMA" id="HALWIFL"/>
<dbReference type="OrthoDB" id="8890589at2759"/>
<dbReference type="PAN-GO" id="P28472">
    <property type="GO annotations" value="12 GO annotations based on evolutionary models"/>
</dbReference>
<dbReference type="PhylomeDB" id="P28472"/>
<dbReference type="TreeFam" id="TF315453"/>
<dbReference type="PathwayCommons" id="P28472"/>
<dbReference type="Reactome" id="R-HSA-1236394">
    <property type="pathway name" value="Signaling by ERBB4"/>
</dbReference>
<dbReference type="Reactome" id="R-HSA-977443">
    <property type="pathway name" value="GABA receptor activation"/>
</dbReference>
<dbReference type="SignaLink" id="P28472"/>
<dbReference type="SIGNOR" id="P28472"/>
<dbReference type="BioGRID-ORCS" id="2562">
    <property type="hits" value="12 hits in 1158 CRISPR screens"/>
</dbReference>
<dbReference type="ChiTaRS" id="GABRB3">
    <property type="organism name" value="human"/>
</dbReference>
<dbReference type="EvolutionaryTrace" id="P28472"/>
<dbReference type="GeneWiki" id="GABRB3"/>
<dbReference type="GenomeRNAi" id="2562"/>
<dbReference type="Pharos" id="P28472">
    <property type="development level" value="Tclin"/>
</dbReference>
<dbReference type="PRO" id="PR:P28472"/>
<dbReference type="Proteomes" id="UP000005640">
    <property type="component" value="Chromosome 15"/>
</dbReference>
<dbReference type="RNAct" id="P28472">
    <property type="molecule type" value="protein"/>
</dbReference>
<dbReference type="Bgee" id="ENSG00000166206">
    <property type="expression patterns" value="Expressed in middle temporal gyrus and 153 other cell types or tissues"/>
</dbReference>
<dbReference type="ExpressionAtlas" id="P28472">
    <property type="expression patterns" value="baseline and differential"/>
</dbReference>
<dbReference type="GO" id="GO:0009986">
    <property type="term" value="C:cell surface"/>
    <property type="evidence" value="ECO:0007669"/>
    <property type="project" value="Ensembl"/>
</dbReference>
<dbReference type="GO" id="GO:0034707">
    <property type="term" value="C:chloride channel complex"/>
    <property type="evidence" value="ECO:0007669"/>
    <property type="project" value="UniProtKB-KW"/>
</dbReference>
<dbReference type="GO" id="GO:0030659">
    <property type="term" value="C:cytoplasmic vesicle membrane"/>
    <property type="evidence" value="ECO:0007669"/>
    <property type="project" value="UniProtKB-SubCell"/>
</dbReference>
<dbReference type="GO" id="GO:0043197">
    <property type="term" value="C:dendritic spine"/>
    <property type="evidence" value="ECO:0000314"/>
    <property type="project" value="UniProt"/>
</dbReference>
<dbReference type="GO" id="GO:1902711">
    <property type="term" value="C:GABA-A receptor complex"/>
    <property type="evidence" value="ECO:0000314"/>
    <property type="project" value="UniProtKB"/>
</dbReference>
<dbReference type="GO" id="GO:0098982">
    <property type="term" value="C:GABA-ergic synapse"/>
    <property type="evidence" value="ECO:0007669"/>
    <property type="project" value="Ensembl"/>
</dbReference>
<dbReference type="GO" id="GO:0005886">
    <property type="term" value="C:plasma membrane"/>
    <property type="evidence" value="ECO:0000314"/>
    <property type="project" value="UniProtKB"/>
</dbReference>
<dbReference type="GO" id="GO:0045211">
    <property type="term" value="C:postsynaptic membrane"/>
    <property type="evidence" value="ECO:0000314"/>
    <property type="project" value="UniProt"/>
</dbReference>
<dbReference type="GO" id="GO:0099634">
    <property type="term" value="C:postsynaptic specialization membrane"/>
    <property type="evidence" value="ECO:0000250"/>
    <property type="project" value="UniProtKB"/>
</dbReference>
<dbReference type="GO" id="GO:0004890">
    <property type="term" value="F:GABA-A receptor activity"/>
    <property type="evidence" value="ECO:0000314"/>
    <property type="project" value="UniProtKB"/>
</dbReference>
<dbReference type="GO" id="GO:0022851">
    <property type="term" value="F:GABA-gated chloride ion channel activity"/>
    <property type="evidence" value="ECO:0000314"/>
    <property type="project" value="UniProtKB"/>
</dbReference>
<dbReference type="GO" id="GO:0042802">
    <property type="term" value="F:identical protein binding"/>
    <property type="evidence" value="ECO:0000353"/>
    <property type="project" value="IntAct"/>
</dbReference>
<dbReference type="GO" id="GO:1904315">
    <property type="term" value="F:transmitter-gated monoatomic ion channel activity involved in regulation of postsynaptic membrane potential"/>
    <property type="evidence" value="ECO:0007669"/>
    <property type="project" value="Ensembl"/>
</dbReference>
<dbReference type="GO" id="GO:0071420">
    <property type="term" value="P:cellular response to histamine"/>
    <property type="evidence" value="ECO:0000314"/>
    <property type="project" value="UniProtKB"/>
</dbReference>
<dbReference type="GO" id="GO:0071294">
    <property type="term" value="P:cellular response to zinc ion"/>
    <property type="evidence" value="ECO:0007669"/>
    <property type="project" value="Ensembl"/>
</dbReference>
<dbReference type="GO" id="GO:0021549">
    <property type="term" value="P:cerebellum development"/>
    <property type="evidence" value="ECO:0007669"/>
    <property type="project" value="Ensembl"/>
</dbReference>
<dbReference type="GO" id="GO:1902476">
    <property type="term" value="P:chloride transmembrane transport"/>
    <property type="evidence" value="ECO:0000314"/>
    <property type="project" value="GO_Central"/>
</dbReference>
<dbReference type="GO" id="GO:0042747">
    <property type="term" value="P:circadian sleep/wake cycle, REM sleep"/>
    <property type="evidence" value="ECO:0007669"/>
    <property type="project" value="Ensembl"/>
</dbReference>
<dbReference type="GO" id="GO:0090102">
    <property type="term" value="P:cochlea development"/>
    <property type="evidence" value="ECO:0007669"/>
    <property type="project" value="Ensembl"/>
</dbReference>
<dbReference type="GO" id="GO:0035640">
    <property type="term" value="P:exploration behavior"/>
    <property type="evidence" value="ECO:0007669"/>
    <property type="project" value="Ensembl"/>
</dbReference>
<dbReference type="GO" id="GO:0007214">
    <property type="term" value="P:gamma-aminobutyric acid signaling pathway"/>
    <property type="evidence" value="ECO:0000314"/>
    <property type="project" value="ComplexPortal"/>
</dbReference>
<dbReference type="GO" id="GO:0060022">
    <property type="term" value="P:hard palate development"/>
    <property type="evidence" value="ECO:0007669"/>
    <property type="project" value="Ensembl"/>
</dbReference>
<dbReference type="GO" id="GO:0060080">
    <property type="term" value="P:inhibitory postsynaptic potential"/>
    <property type="evidence" value="ECO:0007669"/>
    <property type="project" value="Ensembl"/>
</dbReference>
<dbReference type="GO" id="GO:1904862">
    <property type="term" value="P:inhibitory synapse assembly"/>
    <property type="evidence" value="ECO:0000314"/>
    <property type="project" value="UniProtKB"/>
</dbReference>
<dbReference type="GO" id="GO:0060119">
    <property type="term" value="P:inner ear receptor cell development"/>
    <property type="evidence" value="ECO:0007669"/>
    <property type="project" value="Ensembl"/>
</dbReference>
<dbReference type="GO" id="GO:0060384">
    <property type="term" value="P:innervation"/>
    <property type="evidence" value="ECO:0007669"/>
    <property type="project" value="Ensembl"/>
</dbReference>
<dbReference type="GO" id="GO:0007612">
    <property type="term" value="P:learning"/>
    <property type="evidence" value="ECO:0007669"/>
    <property type="project" value="Ensembl"/>
</dbReference>
<dbReference type="GO" id="GO:0007613">
    <property type="term" value="P:memory"/>
    <property type="evidence" value="ECO:0007669"/>
    <property type="project" value="Ensembl"/>
</dbReference>
<dbReference type="GO" id="GO:0061744">
    <property type="term" value="P:motor behavior"/>
    <property type="evidence" value="ECO:0007669"/>
    <property type="project" value="Ensembl"/>
</dbReference>
<dbReference type="GO" id="GO:0019098">
    <property type="term" value="P:reproductive behavior"/>
    <property type="evidence" value="ECO:0007669"/>
    <property type="project" value="Ensembl"/>
</dbReference>
<dbReference type="GO" id="GO:0072347">
    <property type="term" value="P:response to anesthetic"/>
    <property type="evidence" value="ECO:0007669"/>
    <property type="project" value="Ensembl"/>
</dbReference>
<dbReference type="GO" id="GO:0009410">
    <property type="term" value="P:response to xenobiotic stimulus"/>
    <property type="evidence" value="ECO:0007669"/>
    <property type="project" value="Ensembl"/>
</dbReference>
<dbReference type="GO" id="GO:0060021">
    <property type="term" value="P:roof of mouth development"/>
    <property type="evidence" value="ECO:0000250"/>
    <property type="project" value="UniProtKB"/>
</dbReference>
<dbReference type="GO" id="GO:0007165">
    <property type="term" value="P:signal transduction"/>
    <property type="evidence" value="ECO:0000304"/>
    <property type="project" value="ProtInc"/>
</dbReference>
<dbReference type="GO" id="GO:0035176">
    <property type="term" value="P:social behavior"/>
    <property type="evidence" value="ECO:0007669"/>
    <property type="project" value="Ensembl"/>
</dbReference>
<dbReference type="GO" id="GO:0051932">
    <property type="term" value="P:synaptic transmission, GABAergic"/>
    <property type="evidence" value="ECO:0000314"/>
    <property type="project" value="UniProt"/>
</dbReference>
<dbReference type="CDD" id="cd18999">
    <property type="entry name" value="LGIC_ECD_GABAAR_B"/>
    <property type="match status" value="1"/>
</dbReference>
<dbReference type="CDD" id="cd19053">
    <property type="entry name" value="LGIC_TM_GABAAR_beta"/>
    <property type="match status" value="1"/>
</dbReference>
<dbReference type="FunFam" id="1.20.58.390:FF:000004">
    <property type="entry name" value="Gamma-aminobutyric acid receptor subunit beta-2 isoform A"/>
    <property type="match status" value="1"/>
</dbReference>
<dbReference type="FunFam" id="2.70.170.10:FF:000004">
    <property type="entry name" value="Gamma-aminobutyric acid receptor subunit beta-2 isoform A"/>
    <property type="match status" value="1"/>
</dbReference>
<dbReference type="Gene3D" id="2.70.170.10">
    <property type="entry name" value="Neurotransmitter-gated ion-channel ligand-binding domain"/>
    <property type="match status" value="1"/>
</dbReference>
<dbReference type="Gene3D" id="1.20.58.390">
    <property type="entry name" value="Neurotransmitter-gated ion-channel transmembrane domain"/>
    <property type="match status" value="1"/>
</dbReference>
<dbReference type="InterPro" id="IPR006028">
    <property type="entry name" value="GABAA/Glycine_rcpt"/>
</dbReference>
<dbReference type="InterPro" id="IPR002289">
    <property type="entry name" value="GABAAb_rcpt"/>
</dbReference>
<dbReference type="InterPro" id="IPR006202">
    <property type="entry name" value="Neur_chan_lig-bd"/>
</dbReference>
<dbReference type="InterPro" id="IPR036734">
    <property type="entry name" value="Neur_chan_lig-bd_sf"/>
</dbReference>
<dbReference type="InterPro" id="IPR006201">
    <property type="entry name" value="Neur_channel"/>
</dbReference>
<dbReference type="InterPro" id="IPR036719">
    <property type="entry name" value="Neuro-gated_channel_TM_sf"/>
</dbReference>
<dbReference type="InterPro" id="IPR038050">
    <property type="entry name" value="Neuro_actylchol_rec"/>
</dbReference>
<dbReference type="InterPro" id="IPR006029">
    <property type="entry name" value="Neurotrans-gated_channel_TM"/>
</dbReference>
<dbReference type="InterPro" id="IPR018000">
    <property type="entry name" value="Neurotransmitter_ion_chnl_CS"/>
</dbReference>
<dbReference type="NCBIfam" id="TIGR00860">
    <property type="entry name" value="LIC"/>
    <property type="match status" value="1"/>
</dbReference>
<dbReference type="PANTHER" id="PTHR18945">
    <property type="entry name" value="NEUROTRANSMITTER GATED ION CHANNEL"/>
    <property type="match status" value="1"/>
</dbReference>
<dbReference type="Pfam" id="PF02931">
    <property type="entry name" value="Neur_chan_LBD"/>
    <property type="match status" value="1"/>
</dbReference>
<dbReference type="Pfam" id="PF02932">
    <property type="entry name" value="Neur_chan_memb"/>
    <property type="match status" value="1"/>
</dbReference>
<dbReference type="PRINTS" id="PR01160">
    <property type="entry name" value="GABAARBETA"/>
</dbReference>
<dbReference type="PRINTS" id="PR00253">
    <property type="entry name" value="GABAARECEPTR"/>
</dbReference>
<dbReference type="PRINTS" id="PR00252">
    <property type="entry name" value="NRIONCHANNEL"/>
</dbReference>
<dbReference type="SUPFAM" id="SSF90112">
    <property type="entry name" value="Neurotransmitter-gated ion-channel transmembrane pore"/>
    <property type="match status" value="1"/>
</dbReference>
<dbReference type="SUPFAM" id="SSF63712">
    <property type="entry name" value="Nicotinic receptor ligand binding domain-like"/>
    <property type="match status" value="1"/>
</dbReference>
<dbReference type="PROSITE" id="PS00236">
    <property type="entry name" value="NEUROTR_ION_CHANNEL"/>
    <property type="match status" value="1"/>
</dbReference>
<sequence>MWGLAGGRLFGIFSAPVLVAVVCCAQSVNDPGNMSFVKETVDKLLKGYDIRLRPDFGGPPVCVGMNIDIASIDMVSEVNMDYTLTMYFQQYWRDKRLAYSGIPLNLTLDNRVADQLWVPDTYFLNDKKSFVHGVTVKNRMIRLHPDGTVLYGLRITTTAACMMDLRRYPLDEQNCTLEIESYGYTTDDIEFYWRGGDKAVTGVERIELPQFSIVEHRLVSRNVVFATGAYPRLSLSFRLKRNIGYFILQTYMPSILITILSWVSFWINYDASAARVALGITTVLTMTTINTHLRETLPKIPYVKAIDMYLMGCFVFVFLALLEYAFVNYIFFGRGPQRQKKLAEKTAKAKNDRSKSESNRVDAHGNILLTSLEVHNEMNEVSGGIGDTRNSAISFDNSGIQYRKQSMPREGHGRFLGDRSLPHKKTHLRRRSSQLKIKIPDLTDVNAIDRWSRIVFPFTFSLFNLVYWLYYVN</sequence>
<keyword id="KW-0002">3D-structure</keyword>
<keyword id="KW-0025">Alternative splicing</keyword>
<keyword id="KW-1003">Cell membrane</keyword>
<keyword id="KW-0868">Chloride</keyword>
<keyword id="KW-0869">Chloride channel</keyword>
<keyword id="KW-0968">Cytoplasmic vesicle</keyword>
<keyword id="KW-0903">Direct protein sequencing</keyword>
<keyword id="KW-0225">Disease variant</keyword>
<keyword id="KW-1015">Disulfide bond</keyword>
<keyword id="KW-0887">Epilepsy</keyword>
<keyword id="KW-0325">Glycoprotein</keyword>
<keyword id="KW-0407">Ion channel</keyword>
<keyword id="KW-0406">Ion transport</keyword>
<keyword id="KW-1071">Ligand-gated ion channel</keyword>
<keyword id="KW-0472">Membrane</keyword>
<keyword id="KW-0628">Postsynaptic cell membrane</keyword>
<keyword id="KW-1267">Proteomics identification</keyword>
<keyword id="KW-0675">Receptor</keyword>
<keyword id="KW-1185">Reference proteome</keyword>
<keyword id="KW-0732">Signal</keyword>
<keyword id="KW-0770">Synapse</keyword>
<keyword id="KW-0812">Transmembrane</keyword>
<keyword id="KW-1133">Transmembrane helix</keyword>
<keyword id="KW-0813">Transport</keyword>
<proteinExistence type="evidence at protein level"/>
<accession>P28472</accession>
<accession>B7Z2W1</accession>
<accession>B7Z825</accession>
<accession>F5H3D2</accession>
<accession>H7BYV8</accession>
<accession>Q14352</accession>
<accession>Q96FM5</accession>
<gene>
    <name evidence="28" type="primary">GABRB3</name>
</gene>
<reference key="1">
    <citation type="journal article" date="1991" name="Genomics">
        <title>The GABAA receptor beta 3 subunit gene: characterization of a human cDNA from chromosome 15q11q13 and mapping to a region of conserved synteny on mouse chromosome 7.</title>
        <authorList>
            <person name="Wagstaff J."/>
            <person name="Chaillet J.R."/>
            <person name="Lalande M."/>
        </authorList>
    </citation>
    <scope>NUCLEOTIDE SEQUENCE [MRNA] (ISOFORM 1)</scope>
</reference>
<reference key="2">
    <citation type="journal article" date="2004" name="Nat. Genet.">
        <title>Complete sequencing and characterization of 21,243 full-length human cDNAs.</title>
        <authorList>
            <person name="Ota T."/>
            <person name="Suzuki Y."/>
            <person name="Nishikawa T."/>
            <person name="Otsuki T."/>
            <person name="Sugiyama T."/>
            <person name="Irie R."/>
            <person name="Wakamatsu A."/>
            <person name="Hayashi K."/>
            <person name="Sato H."/>
            <person name="Nagai K."/>
            <person name="Kimura K."/>
            <person name="Makita H."/>
            <person name="Sekine M."/>
            <person name="Obayashi M."/>
            <person name="Nishi T."/>
            <person name="Shibahara T."/>
            <person name="Tanaka T."/>
            <person name="Ishii S."/>
            <person name="Yamamoto J."/>
            <person name="Saito K."/>
            <person name="Kawai Y."/>
            <person name="Isono Y."/>
            <person name="Nakamura Y."/>
            <person name="Nagahari K."/>
            <person name="Murakami K."/>
            <person name="Yasuda T."/>
            <person name="Iwayanagi T."/>
            <person name="Wagatsuma M."/>
            <person name="Shiratori A."/>
            <person name="Sudo H."/>
            <person name="Hosoiri T."/>
            <person name="Kaku Y."/>
            <person name="Kodaira H."/>
            <person name="Kondo H."/>
            <person name="Sugawara M."/>
            <person name="Takahashi M."/>
            <person name="Kanda K."/>
            <person name="Yokoi T."/>
            <person name="Furuya T."/>
            <person name="Kikkawa E."/>
            <person name="Omura Y."/>
            <person name="Abe K."/>
            <person name="Kamihara K."/>
            <person name="Katsuta N."/>
            <person name="Sato K."/>
            <person name="Tanikawa M."/>
            <person name="Yamazaki M."/>
            <person name="Ninomiya K."/>
            <person name="Ishibashi T."/>
            <person name="Yamashita H."/>
            <person name="Murakawa K."/>
            <person name="Fujimori K."/>
            <person name="Tanai H."/>
            <person name="Kimata M."/>
            <person name="Watanabe M."/>
            <person name="Hiraoka S."/>
            <person name="Chiba Y."/>
            <person name="Ishida S."/>
            <person name="Ono Y."/>
            <person name="Takiguchi S."/>
            <person name="Watanabe S."/>
            <person name="Yosida M."/>
            <person name="Hotuta T."/>
            <person name="Kusano J."/>
            <person name="Kanehori K."/>
            <person name="Takahashi-Fujii A."/>
            <person name="Hara H."/>
            <person name="Tanase T.-O."/>
            <person name="Nomura Y."/>
            <person name="Togiya S."/>
            <person name="Komai F."/>
            <person name="Hara R."/>
            <person name="Takeuchi K."/>
            <person name="Arita M."/>
            <person name="Imose N."/>
            <person name="Musashino K."/>
            <person name="Yuuki H."/>
            <person name="Oshima A."/>
            <person name="Sasaki N."/>
            <person name="Aotsuka S."/>
            <person name="Yoshikawa Y."/>
            <person name="Matsunawa H."/>
            <person name="Ichihara T."/>
            <person name="Shiohata N."/>
            <person name="Sano S."/>
            <person name="Moriya S."/>
            <person name="Momiyama H."/>
            <person name="Satoh N."/>
            <person name="Takami S."/>
            <person name="Terashima Y."/>
            <person name="Suzuki O."/>
            <person name="Nakagawa S."/>
            <person name="Senoh A."/>
            <person name="Mizoguchi H."/>
            <person name="Goto Y."/>
            <person name="Shimizu F."/>
            <person name="Wakebe H."/>
            <person name="Hishigaki H."/>
            <person name="Watanabe T."/>
            <person name="Sugiyama A."/>
            <person name="Takemoto M."/>
            <person name="Kawakami B."/>
            <person name="Yamazaki M."/>
            <person name="Watanabe K."/>
            <person name="Kumagai A."/>
            <person name="Itakura S."/>
            <person name="Fukuzumi Y."/>
            <person name="Fujimori Y."/>
            <person name="Komiyama M."/>
            <person name="Tashiro H."/>
            <person name="Tanigami A."/>
            <person name="Fujiwara T."/>
            <person name="Ono T."/>
            <person name="Yamada K."/>
            <person name="Fujii Y."/>
            <person name="Ozaki K."/>
            <person name="Hirao M."/>
            <person name="Ohmori Y."/>
            <person name="Kawabata A."/>
            <person name="Hikiji T."/>
            <person name="Kobatake N."/>
            <person name="Inagaki H."/>
            <person name="Ikema Y."/>
            <person name="Okamoto S."/>
            <person name="Okitani R."/>
            <person name="Kawakami T."/>
            <person name="Noguchi S."/>
            <person name="Itoh T."/>
            <person name="Shigeta K."/>
            <person name="Senba T."/>
            <person name="Matsumura K."/>
            <person name="Nakajima Y."/>
            <person name="Mizuno T."/>
            <person name="Morinaga M."/>
            <person name="Sasaki M."/>
            <person name="Togashi T."/>
            <person name="Oyama M."/>
            <person name="Hata H."/>
            <person name="Watanabe M."/>
            <person name="Komatsu T."/>
            <person name="Mizushima-Sugano J."/>
            <person name="Satoh T."/>
            <person name="Shirai Y."/>
            <person name="Takahashi Y."/>
            <person name="Nakagawa K."/>
            <person name="Okumura K."/>
            <person name="Nagase T."/>
            <person name="Nomura N."/>
            <person name="Kikuchi H."/>
            <person name="Masuho Y."/>
            <person name="Yamashita R."/>
            <person name="Nakai K."/>
            <person name="Yada T."/>
            <person name="Nakamura Y."/>
            <person name="Ohara O."/>
            <person name="Isogai T."/>
            <person name="Sugano S."/>
        </authorList>
    </citation>
    <scope>NUCLEOTIDE SEQUENCE [LARGE SCALE MRNA] (ISOFORMS 3 AND 4)</scope>
    <source>
        <tissue>Brain</tissue>
        <tissue>Testis</tissue>
    </source>
</reference>
<reference key="3">
    <citation type="journal article" date="2006" name="Nature">
        <title>Analysis of the DNA sequence and duplication history of human chromosome 15.</title>
        <authorList>
            <person name="Zody M.C."/>
            <person name="Garber M."/>
            <person name="Sharpe T."/>
            <person name="Young S.K."/>
            <person name="Rowen L."/>
            <person name="O'Neill K."/>
            <person name="Whittaker C.A."/>
            <person name="Kamal M."/>
            <person name="Chang J.L."/>
            <person name="Cuomo C.A."/>
            <person name="Dewar K."/>
            <person name="FitzGerald M.G."/>
            <person name="Kodira C.D."/>
            <person name="Madan A."/>
            <person name="Qin S."/>
            <person name="Yang X."/>
            <person name="Abbasi N."/>
            <person name="Abouelleil A."/>
            <person name="Arachchi H.M."/>
            <person name="Baradarani L."/>
            <person name="Birditt B."/>
            <person name="Bloom S."/>
            <person name="Bloom T."/>
            <person name="Borowsky M.L."/>
            <person name="Burke J."/>
            <person name="Butler J."/>
            <person name="Cook A."/>
            <person name="DeArellano K."/>
            <person name="DeCaprio D."/>
            <person name="Dorris L. III"/>
            <person name="Dors M."/>
            <person name="Eichler E.E."/>
            <person name="Engels R."/>
            <person name="Fahey J."/>
            <person name="Fleetwood P."/>
            <person name="Friedman C."/>
            <person name="Gearin G."/>
            <person name="Hall J.L."/>
            <person name="Hensley G."/>
            <person name="Johnson E."/>
            <person name="Jones C."/>
            <person name="Kamat A."/>
            <person name="Kaur A."/>
            <person name="Locke D.P."/>
            <person name="Madan A."/>
            <person name="Munson G."/>
            <person name="Jaffe D.B."/>
            <person name="Lui A."/>
            <person name="Macdonald P."/>
            <person name="Mauceli E."/>
            <person name="Naylor J.W."/>
            <person name="Nesbitt R."/>
            <person name="Nicol R."/>
            <person name="O'Leary S.B."/>
            <person name="Ratcliffe A."/>
            <person name="Rounsley S."/>
            <person name="She X."/>
            <person name="Sneddon K.M.B."/>
            <person name="Stewart S."/>
            <person name="Sougnez C."/>
            <person name="Stone S.M."/>
            <person name="Topham K."/>
            <person name="Vincent D."/>
            <person name="Wang S."/>
            <person name="Zimmer A.R."/>
            <person name="Birren B.W."/>
            <person name="Hood L."/>
            <person name="Lander E.S."/>
            <person name="Nusbaum C."/>
        </authorList>
    </citation>
    <scope>NUCLEOTIDE SEQUENCE [LARGE SCALE GENOMIC DNA]</scope>
</reference>
<reference key="4">
    <citation type="submission" date="2005-07" db="EMBL/GenBank/DDBJ databases">
        <authorList>
            <person name="Mural R.J."/>
            <person name="Istrail S."/>
            <person name="Sutton G."/>
            <person name="Florea L."/>
            <person name="Halpern A.L."/>
            <person name="Mobarry C.M."/>
            <person name="Lippert R."/>
            <person name="Walenz B."/>
            <person name="Shatkay H."/>
            <person name="Dew I."/>
            <person name="Miller J.R."/>
            <person name="Flanigan M.J."/>
            <person name="Edwards N.J."/>
            <person name="Bolanos R."/>
            <person name="Fasulo D."/>
            <person name="Halldorsson B.V."/>
            <person name="Hannenhalli S."/>
            <person name="Turner R."/>
            <person name="Yooseph S."/>
            <person name="Lu F."/>
            <person name="Nusskern D.R."/>
            <person name="Shue B.C."/>
            <person name="Zheng X.H."/>
            <person name="Zhong F."/>
            <person name="Delcher A.L."/>
            <person name="Huson D.H."/>
            <person name="Kravitz S.A."/>
            <person name="Mouchard L."/>
            <person name="Reinert K."/>
            <person name="Remington K.A."/>
            <person name="Clark A.G."/>
            <person name="Waterman M.S."/>
            <person name="Eichler E.E."/>
            <person name="Adams M.D."/>
            <person name="Hunkapiller M.W."/>
            <person name="Myers E.W."/>
            <person name="Venter J.C."/>
        </authorList>
    </citation>
    <scope>NUCLEOTIDE SEQUENCE [LARGE SCALE GENOMIC DNA]</scope>
</reference>
<reference key="5">
    <citation type="journal article" date="2004" name="Genome Res.">
        <title>The status, quality, and expansion of the NIH full-length cDNA project: the Mammalian Gene Collection (MGC).</title>
        <authorList>
            <consortium name="The MGC Project Team"/>
        </authorList>
    </citation>
    <scope>NUCLEOTIDE SEQUENCE [LARGE SCALE MRNA] (ISOFORM 1)</scope>
    <scope>VARIANT LEU-173</scope>
    <source>
        <tissue>Eye</tissue>
    </source>
</reference>
<reference key="6">
    <citation type="journal article" date="1993" name="J. Biol. Chem.">
        <title>A strong promoter element is located between alternative exons of a gene encoding the human gamma-aminobutyric acid-type A receptor beta 3 subunit (GABRB3).</title>
        <authorList>
            <person name="Kirkness E.F."/>
            <person name="Fraser C.M."/>
        </authorList>
    </citation>
    <scope>NUCLEOTIDE SEQUENCE [GENOMIC DNA] OF 1-80 (ISOFORMS 1 AND 2)</scope>
    <source>
        <tissue>Fibroblast</tissue>
    </source>
</reference>
<reference key="7">
    <citation type="journal article" date="1991" name="Am. J. Hum. Genet.">
        <title>Localization of the gene encoding the GABAA receptor beta 3 subunit to the Angelman/Prader-Willi region of human chromosome 15.</title>
        <authorList>
            <person name="Wagstaff J."/>
            <person name="Knoll J.H.M."/>
            <person name="Fleming J."/>
            <person name="Kirkness E.F."/>
            <person name="Martin-Gallardo A."/>
            <person name="Greenberg F."/>
            <person name="Graham J.M. Jr."/>
            <person name="Menninger J."/>
            <person name="Ward D."/>
            <person name="Venter J.C."/>
            <person name="Lalande M."/>
        </authorList>
    </citation>
    <scope>NUCLEOTIDE SEQUENCE [GENOMIC DNA] OF 81-153 AND 183-227</scope>
</reference>
<reference key="8">
    <citation type="journal article" date="2004" name="Proc. Natl. Acad. Sci. U.S.A.">
        <title>Tonic inhibition in mouse hippocampal CA1 pyramidal neurons is mediated by alpha5 subunit-containing gamma-aminobutyric acid type A receptors.</title>
        <authorList>
            <person name="Caraiscos V.B."/>
            <person name="Elliott E.M."/>
            <person name="You-Ten K.E."/>
            <person name="Cheng V.Y."/>
            <person name="Belelli D."/>
            <person name="Newell J.G."/>
            <person name="Jackson M.F."/>
            <person name="Lambert J.J."/>
            <person name="Rosahl T.W."/>
            <person name="Wafford K.A."/>
            <person name="MacDonald J.F."/>
            <person name="Orser B.A."/>
        </authorList>
    </citation>
    <scope>FUNCTION</scope>
    <scope>TRANSPORTER ACTIVITY</scope>
    <scope>INTERACTION WITH GABRA5 AND GABRG2</scope>
</reference>
<reference key="9">
    <citation type="journal article" date="2008" name="J. Biol. Chem.">
        <title>Histamine action on vertebrate GABAA receptors: direct channel gating and potentiation of GABA responses.</title>
        <authorList>
            <person name="Saras A."/>
            <person name="Gisselmann G."/>
            <person name="Vogt-Eisele A.K."/>
            <person name="Erlkamp K.S."/>
            <person name="Kletke O."/>
            <person name="Pusch H."/>
            <person name="Hatt H."/>
        </authorList>
    </citation>
    <scope>FUNCTION</scope>
    <scope>SUBCELLULAR LOCATION</scope>
    <scope>SUBUNIT</scope>
</reference>
<reference key="10">
    <citation type="journal article" date="2012" name="Biochemistry">
        <title>Mapping general anesthetic binding site(s) in human alpha1beta3 gamma-aminobutyric acid type A receptors with [3H]TDBzl-etomidate, a photoreactive etomidate analogue.</title>
        <authorList>
            <person name="Chiara D.C."/>
            <person name="Dostalova Z."/>
            <person name="Jayakar S.S."/>
            <person name="Zhou X."/>
            <person name="Miller K.W."/>
            <person name="Cohen J.B."/>
        </authorList>
    </citation>
    <scope>FUNCTION</scope>
    <scope>SUBUNIT</scope>
    <scope>SUBCELLULAR LOCATION</scope>
    <scope>PARTIAL PROTEIN SEQUENCE</scope>
</reference>
<reference key="11">
    <citation type="journal article" date="2014" name="J. Vis. Exp.">
        <title>Inhibitory synapse formation in a co-culture model incorporating GABAergic medium spiny neurons and HEK293 cells stably expressing GABAA receptors.</title>
        <authorList>
            <person name="Brown L.E."/>
            <person name="Fuchs C."/>
            <person name="Nicholson M.W."/>
            <person name="Stephenson F.A."/>
            <person name="Thomson A.M."/>
            <person name="Jovanovic J.N."/>
        </authorList>
    </citation>
    <scope>FUNCTION</scope>
    <scope>SUBCELLULAR LOCATION</scope>
</reference>
<reference key="12">
    <citation type="journal article" date="2014" name="Nature">
        <title>Crystal structure of a human GABAA receptor.</title>
        <authorList>
            <person name="Miller P.S."/>
            <person name="Aricescu A.R."/>
        </authorList>
    </citation>
    <scope>X-RAY CRYSTALLOGRAPHY (2.97 ANGSTROMS) OF 26-473 IN COMPLEX WITH THE AGONIST BENZAMIDINE</scope>
    <scope>FUNCTION</scope>
    <scope>SUBCELLULAR LOCATION</scope>
    <scope>TOPOLOGY</scope>
    <scope>SUBUNIT</scope>
    <scope>GLYCOSYLATION AT ASN-33; ASN-105 AND ASN-174</scope>
    <scope>DISULFIDE BOND</scope>
</reference>
<reference evidence="30" key="13">
    <citation type="journal article" date="2018" name="Cell Res.">
        <title>Cryo-EM structure of the human alpha5beta3 GABAA receptor.</title>
        <authorList>
            <person name="Liu S."/>
            <person name="Xu L."/>
            <person name="Guan F."/>
            <person name="Liu Y.T."/>
            <person name="Cui Y."/>
            <person name="Zhang Q."/>
            <person name="Zheng X."/>
            <person name="Bi G.Q."/>
            <person name="Zhou Z.H."/>
            <person name="Zhang X."/>
            <person name="Ye S."/>
        </authorList>
    </citation>
    <scope>STRUCTURE BY ELECTRON MICROSCOPY (3.51 ANGSTROMS) OF 1-332</scope>
    <scope>FUNCTION</scope>
    <scope>SUBUNIT</scope>
    <scope>INTERACTION WITH GABRA5</scope>
    <scope>DISULFIDE BOND</scope>
    <scope>GLYCOSYLATION AT ASN-174</scope>
</reference>
<reference evidence="31" key="14">
    <citation type="journal article" date="2019" name="Nature">
        <title>Cryo-EM structure of the human alpha1beta3gamma2 GABAA receptor in a lipid bilayer.</title>
        <authorList>
            <person name="Laverty D."/>
            <person name="Desai R."/>
            <person name="Uchanski T."/>
            <person name="Masiulis S."/>
            <person name="Stec W.J."/>
            <person name="Malinauskas T."/>
            <person name="Zivanov J."/>
            <person name="Pardon E."/>
            <person name="Steyaert J."/>
            <person name="Miller K.W."/>
            <person name="Aricescu A.R."/>
        </authorList>
    </citation>
    <scope>STRUCTURE BY ELECTRON MICROSCOPY (3.20 ANGSTROMS) OF 26-473</scope>
    <scope>FUNCTION</scope>
    <scope>TRANSPORTER ACTIVITY</scope>
    <scope>SUBUNIT</scope>
    <scope>INTERACTION WITH GABRA1 AND GABRG2</scope>
    <scope>DISULFIDE BOND</scope>
    <scope>GLYCOSYLATION AT ASN-105 AND ASN-174</scope>
</reference>
<reference evidence="32 33 34 35 36 37 38 39 40 41" key="15">
    <citation type="journal article" date="2022" name="Nature">
        <title>Differential assembly diversifies GABAA receptor structures and signalling.</title>
        <authorList>
            <person name="Sente A."/>
            <person name="Desai R."/>
            <person name="Naydenova K."/>
            <person name="Malinauskas T."/>
            <person name="Jounaidi Y."/>
            <person name="Miehling J."/>
            <person name="Zhou X."/>
            <person name="Masiulis S."/>
            <person name="Hardwick S.W."/>
            <person name="Chirgadze D.Y."/>
            <person name="Miller K.W."/>
            <person name="Aricescu A.R."/>
        </authorList>
    </citation>
    <scope>STRUCTURE BY ELECTRON MICROSCOPY (2.50 ANGSTROMS)</scope>
    <scope>FUNCTION</scope>
    <scope>TRANSPORTER ACTIVITY</scope>
    <scope>SUBUNIT</scope>
    <scope>INTERACTION WITH GABRA4 AND GABRD</scope>
    <scope>DISULFIDE BOND</scope>
    <scope>GLYCOSYLATION AT ASN-33; ASN-105 AND ASN-174</scope>
</reference>
<reference key="16">
    <citation type="journal article" date="2002" name="Hum. Genet.">
        <title>Functional characterization of the new human GABA(A) receptor mutation beta3(R192H).</title>
        <authorList>
            <person name="Buhr A."/>
            <person name="Bianchi M.T."/>
            <person name="Baur R."/>
            <person name="Courtet P."/>
            <person name="Pignay V."/>
            <person name="Boulenger J.P."/>
            <person name="Gallati S."/>
            <person name="Hinkle D.J."/>
            <person name="Macdonald R.L."/>
            <person name="Sigel E."/>
        </authorList>
    </citation>
    <scope>VARIANT HIS-217</scope>
    <scope>CHARACTERIZATION OF VARIANT HIS-217</scope>
</reference>
<reference key="17">
    <citation type="journal article" date="2008" name="Am. J. Hum. Genet.">
        <title>Hyperglycosylation and reduced GABA currents of mutated GABRB3 polypeptide in remitting childhood absence epilepsy.</title>
        <authorList>
            <person name="Tanaka M."/>
            <person name="Olsen R.W."/>
            <person name="Medina M.T."/>
            <person name="Schwartz E."/>
            <person name="Alonso M.E."/>
            <person name="Duron R.M."/>
            <person name="Castro-Ortega R."/>
            <person name="Martinez-Juarez I.E."/>
            <person name="Pascual-Castroviejo I."/>
            <person name="Machado-Salas J."/>
            <person name="Silva R."/>
            <person name="Bailey J.N."/>
            <person name="Bai D."/>
            <person name="Ochoa A."/>
            <person name="Jara-Prado A."/>
            <person name="Pineda G."/>
            <person name="Macdonald R.L."/>
            <person name="Delgado-Escueta A.V."/>
        </authorList>
    </citation>
    <scope>VARIANT ECA5 ARG-32</scope>
    <scope>CHARACTERIZATION OF VARIANT ECA5 ARG-32</scope>
    <scope>VARIANTS ECA5 SER-11 AND PHE-15 (ISOFORM 2)</scope>
    <scope>CHARACTERIZATION OF VARIANTS ECA5 SER-11 AND PHE-15 (ISOFORM 2)</scope>
    <scope>FUNCTION</scope>
    <scope>SUBCELLULAR LOCATION</scope>
    <scope>SUBUNIT</scope>
</reference>
<reference key="18">
    <citation type="journal article" date="2012" name="J. Biol. Chem.">
        <title>GABRB3 mutation, G32R, associated with childhood absence epilepsy alters alpha1beta3gamma2L gamma-aminobutyric acid type A (GABAA) receptor expression and channel gating.</title>
        <authorList>
            <person name="Gurba K.N."/>
            <person name="Hernandez C.C."/>
            <person name="Hu N."/>
            <person name="Macdonald R.L."/>
        </authorList>
    </citation>
    <scope>CHARACTERIZATION OF VARIANT ECA5 ARG-32</scope>
    <scope>FUNCTION</scope>
    <scope>TRANSPORTER ACTIVITY</scope>
    <scope>SUBCELLULAR LOCATION</scope>
    <scope>SUBUNIT</scope>
    <scope>INTERACTION WITH GBRA1 AND GBRG2</scope>
</reference>
<reference key="19">
    <citation type="journal article" date="2013" name="Nature">
        <title>De novo mutations in epileptic encephalopathies.</title>
        <authorList>
            <consortium name="Epi4K Consortium"/>
            <consortium name="Epilepsy Phenome/Genome Project"/>
            <person name="Allen A.S."/>
            <person name="Berkovic S.F."/>
            <person name="Cossette P."/>
            <person name="Delanty N."/>
            <person name="Dlugos D."/>
            <person name="Eichler E.E."/>
            <person name="Epstein M.P."/>
            <person name="Glauser T."/>
            <person name="Goldstein D.B."/>
            <person name="Han Y."/>
            <person name="Heinzen E.L."/>
            <person name="Hitomi Y."/>
            <person name="Howell K.B."/>
            <person name="Johnson M.R."/>
            <person name="Kuzniecky R."/>
            <person name="Lowenstein D.H."/>
            <person name="Lu Y.F."/>
            <person name="Madou M.R."/>
            <person name="Marson A.G."/>
            <person name="Mefford H.C."/>
            <person name="Esmaeeli Nieh S."/>
            <person name="O'Brien T.J."/>
            <person name="Ottman R."/>
            <person name="Petrovski S."/>
            <person name="Poduri A."/>
            <person name="Ruzzo E.K."/>
            <person name="Scheffer I.E."/>
            <person name="Sherr E.H."/>
            <person name="Yuskaitis C.J."/>
            <person name="Abou-Khalil B."/>
            <person name="Alldredge B.K."/>
            <person name="Bautista J.F."/>
            <person name="Berkovic S.F."/>
            <person name="Boro A."/>
            <person name="Cascino G.D."/>
            <person name="Consalvo D."/>
            <person name="Crumrine P."/>
            <person name="Devinsky O."/>
            <person name="Dlugos D."/>
            <person name="Epstein M.P."/>
            <person name="Fiol M."/>
            <person name="Fountain N.B."/>
            <person name="French J."/>
            <person name="Friedman D."/>
            <person name="Geller E.B."/>
            <person name="Glauser T."/>
            <person name="Glynn S."/>
            <person name="Haut S.R."/>
            <person name="Hayward J."/>
            <person name="Helmers S.L."/>
            <person name="Joshi S."/>
            <person name="Kanner A."/>
            <person name="Kirsch H.E."/>
            <person name="Knowlton R.C."/>
            <person name="Kossoff E.H."/>
            <person name="Kuperman R."/>
            <person name="Kuzniecky R."/>
            <person name="Lowenstein D.H."/>
            <person name="McGuire S.M."/>
            <person name="Motika P.V."/>
            <person name="Novotny E.J."/>
            <person name="Ottman R."/>
            <person name="Paolicchi J.M."/>
            <person name="Parent J.M."/>
            <person name="Park K."/>
            <person name="Poduri A."/>
            <person name="Scheffer I.E."/>
            <person name="Shellhaas R.A."/>
            <person name="Sherr E.H."/>
            <person name="Shih J.J."/>
            <person name="Singh R."/>
            <person name="Sirven J."/>
            <person name="Smith M.C."/>
            <person name="Sullivan J."/>
            <person name="Lin Thio L."/>
            <person name="Venkat A."/>
            <person name="Vining E.P."/>
            <person name="Von Allmen G.K."/>
            <person name="Weisenberg J.L."/>
            <person name="Widdess-Walsh P."/>
            <person name="Winawer M.R."/>
        </authorList>
    </citation>
    <scope>INVOLVEMENT IN DEE43</scope>
    <scope>VARIANT DEE43 ASN-120</scope>
</reference>
<reference key="20">
    <citation type="journal article" date="2014" name="PLoS Genet.">
        <title>De novo mutations in moderate or severe intellectual disability.</title>
        <authorList>
            <person name="Hamdan F.F."/>
            <person name="Srour M."/>
            <person name="Capo-Chichi J.M."/>
            <person name="Daoud H."/>
            <person name="Nassif C."/>
            <person name="Patry L."/>
            <person name="Massicotte C."/>
            <person name="Ambalavanan A."/>
            <person name="Spiegelman D."/>
            <person name="Diallo O."/>
            <person name="Henrion E."/>
            <person name="Dionne-Laporte A."/>
            <person name="Fougerat A."/>
            <person name="Pshezhetsky A.V."/>
            <person name="Venkateswaran S."/>
            <person name="Rouleau G.A."/>
            <person name="Michaud J.L."/>
        </authorList>
    </citation>
    <scope>VARIANT DEE43 HIS-138 INS</scope>
</reference>
<reference key="21">
    <citation type="journal article" date="2016" name="Am. J. Hum. Genet.">
        <title>De novo mutations in SLC1A2 and CACNA1A are important causes of epileptic encephalopathies.</title>
        <authorList>
            <consortium name="Epi4K Consortium"/>
        </authorList>
    </citation>
    <scope>INVOLVEMENT IN DEE43</scope>
    <scope>VARIANTS DEE43 ASN-120; MET-157; PHE-182; LYS-249; GLN-256; HIS-293 AND THR-305</scope>
</reference>
<reference key="22">
    <citation type="journal article" date="2016" name="Ann. Neurol.">
        <title>Epileptic encephalopathy de novo GABRB mutations impair GABAA receptor function.</title>
        <authorList>
            <person name="Janve V.S."/>
            <person name="Hernandez C.C."/>
            <person name="Verdier K.M."/>
            <person name="Hu N."/>
            <person name="Macdonald R.L."/>
        </authorList>
    </citation>
    <scope>CHARACTERIZATION OF VARIANT DEE43 ASN-120</scope>
    <scope>FUNCTION</scope>
    <scope>TRANSPORTER ACTIVITY</scope>
    <scope>SUBCELLULAR LOCATION</scope>
</reference>
<reference key="23">
    <citation type="journal article" date="2016" name="J. Med. Genet.">
        <title>Improving diagnosis and broadening the phenotypes in early-onset seizure and severe developmental delay disorders through gene panel analysis.</title>
        <authorList>
            <person name="Trump N."/>
            <person name="McTague A."/>
            <person name="Brittain H."/>
            <person name="Papandreou A."/>
            <person name="Meyer E."/>
            <person name="Ngoh A."/>
            <person name="Palmer R."/>
            <person name="Morrogh D."/>
            <person name="Boustred C."/>
            <person name="Hurst J.A."/>
            <person name="Jenkins L."/>
            <person name="Kurian M.A."/>
            <person name="Scott R.H."/>
        </authorList>
    </citation>
    <scope>VARIANT DEE43 ILE-287</scope>
</reference>
<reference key="24">
    <citation type="journal article" date="2017" name="Am. J. Med. Genet. A">
        <title>A mutation in GABRB3 associated with Dravet syndrome.</title>
        <authorList>
            <person name="Le S.V."/>
            <person name="Le P.H.T."/>
            <person name="Le T.K.V."/>
            <person name="Kieu Huynh T.T."/>
            <person name="Hang Do T.T."/>
        </authorList>
    </citation>
    <scope>VARIANT GLN-232</scope>
</reference>
<reference key="25">
    <citation type="journal article" date="2017" name="Hum. Mutat.">
        <title>Diagnostic targeted resequencing in 349 patients with drug-resistant pediatric epilepsies identifies causative mutations in 30 different genes.</title>
        <authorList>
            <consortium name="Clinical Study Group"/>
            <person name="Parrini E."/>
            <person name="Marini C."/>
            <person name="Mei D."/>
            <person name="Galuppi A."/>
            <person name="Cellini E."/>
            <person name="Pucatti D."/>
            <person name="Chiti L."/>
            <person name="Rutigliano D."/>
            <person name="Bianchini C."/>
            <person name="Virdo S."/>
            <person name="De Vita D."/>
            <person name="Bigoni S."/>
            <person name="Barba C."/>
            <person name="Mari F."/>
            <person name="Montomoli M."/>
            <person name="Pisano T."/>
            <person name="Rosati A."/>
            <person name="Guerrini R."/>
        </authorList>
    </citation>
    <scope>VARIANTS DEE43 PHE-124 AND PHE-254</scope>
</reference>
<organism>
    <name type="scientific">Homo sapiens</name>
    <name type="common">Human</name>
    <dbReference type="NCBI Taxonomy" id="9606"/>
    <lineage>
        <taxon>Eukaryota</taxon>
        <taxon>Metazoa</taxon>
        <taxon>Chordata</taxon>
        <taxon>Craniata</taxon>
        <taxon>Vertebrata</taxon>
        <taxon>Euteleostomi</taxon>
        <taxon>Mammalia</taxon>
        <taxon>Eutheria</taxon>
        <taxon>Euarchontoglires</taxon>
        <taxon>Primates</taxon>
        <taxon>Haplorrhini</taxon>
        <taxon>Catarrhini</taxon>
        <taxon>Hominidae</taxon>
        <taxon>Homo</taxon>
    </lineage>
</organism>
<feature type="signal peptide" evidence="3">
    <location>
        <begin position="1"/>
        <end position="25"/>
    </location>
</feature>
<feature type="chain" id="PRO_0000000462" description="Gamma-aminobutyric acid receptor subunit beta-3">
    <location>
        <begin position="26"/>
        <end position="473"/>
    </location>
</feature>
<feature type="topological domain" description="Extracellular" evidence="12">
    <location>
        <begin position="26"/>
        <end position="246"/>
    </location>
</feature>
<feature type="transmembrane region" description="Helical" evidence="22 34">
    <location>
        <begin position="247"/>
        <end position="267"/>
    </location>
</feature>
<feature type="topological domain" description="Cytoplasmic" evidence="12">
    <location>
        <begin position="268"/>
        <end position="271"/>
    </location>
</feature>
<feature type="transmembrane region" description="Helical" evidence="22 34">
    <location>
        <begin position="272"/>
        <end position="292"/>
    </location>
</feature>
<feature type="topological domain" description="Extracellular" evidence="12">
    <location>
        <begin position="293"/>
        <end position="304"/>
    </location>
</feature>
<feature type="transmembrane region" description="Helical" evidence="22 34">
    <location>
        <begin position="305"/>
        <end position="328"/>
    </location>
</feature>
<feature type="topological domain" description="Cytoplasmic" evidence="12">
    <location>
        <begin position="329"/>
        <end position="447"/>
    </location>
</feature>
<feature type="transmembrane region" description="Helical" evidence="22 34">
    <location>
        <begin position="448"/>
        <end position="470"/>
    </location>
</feature>
<feature type="topological domain" description="Extracellular" evidence="27">
    <location>
        <begin position="471"/>
        <end position="473"/>
    </location>
</feature>
<feature type="binding site" evidence="12">
    <location>
        <begin position="120"/>
        <end position="122"/>
    </location>
    <ligand>
        <name>benzamidine</name>
        <dbReference type="ChEBI" id="CHEBI:187892"/>
        <note>agonist</note>
    </ligand>
</feature>
<feature type="binding site" description="in chain A" evidence="22 34">
    <location>
        <position position="122"/>
    </location>
    <ligand>
        <name>4-aminobutanoate</name>
        <dbReference type="ChEBI" id="CHEBI:59888"/>
        <note>ligand shared with the neighboring alpha subunit</note>
    </ligand>
</feature>
<feature type="binding site" description="in chain B" evidence="22 34">
    <location>
        <position position="122"/>
    </location>
    <ligand>
        <name>histamine</name>
        <dbReference type="ChEBI" id="CHEBI:58432"/>
        <note>ligand shared between two neighboring beta subunits</note>
    </ligand>
</feature>
<feature type="binding site" evidence="12 29">
    <location>
        <begin position="180"/>
        <end position="182"/>
    </location>
    <ligand>
        <name>benzamidine</name>
        <dbReference type="ChEBI" id="CHEBI:187892"/>
        <note>agonist</note>
    </ligand>
</feature>
<feature type="binding site" description="in chain A" evidence="22 34">
    <location>
        <position position="180"/>
    </location>
    <ligand>
        <name>4-aminobutanoate</name>
        <dbReference type="ChEBI" id="CHEBI:59888"/>
        <note>ligand shared with the neighboring alpha subunit</note>
    </ligand>
</feature>
<feature type="binding site" description="in chain B" evidence="22 34">
    <location>
        <begin position="181"/>
        <end position="182"/>
    </location>
    <ligand>
        <name>histamine</name>
        <dbReference type="ChEBI" id="CHEBI:58432"/>
        <note>ligand shared between two neighboring beta subunits</note>
    </ligand>
</feature>
<feature type="binding site" description="in chain A" evidence="20 30">
    <location>
        <position position="182"/>
    </location>
    <ligand>
        <name>4-aminobutanoate</name>
        <dbReference type="ChEBI" id="CHEBI:59888"/>
        <note>ligand shared with the neighboring alpha subunit</note>
    </ligand>
</feature>
<feature type="binding site" evidence="12">
    <location>
        <position position="225"/>
    </location>
    <ligand>
        <name>benzamidine</name>
        <dbReference type="ChEBI" id="CHEBI:187892"/>
        <note>agonist</note>
    </ligand>
</feature>
<feature type="binding site" description="in chain A" evidence="20 22 30 34">
    <location>
        <position position="227"/>
    </location>
    <ligand>
        <name>4-aminobutanoate</name>
        <dbReference type="ChEBI" id="CHEBI:59888"/>
        <note>ligand shared with the neighboring alpha subunit</note>
    </ligand>
</feature>
<feature type="binding site" description="in chain B" evidence="22 34">
    <location>
        <position position="227"/>
    </location>
    <ligand>
        <name>histamine</name>
        <dbReference type="ChEBI" id="CHEBI:58432"/>
        <note>ligand shared between two neighboring beta subunits</note>
    </ligand>
</feature>
<feature type="glycosylation site" description="N-linked (GlcNAc...) asparagine" evidence="12 22 34">
    <location>
        <position position="33"/>
    </location>
</feature>
<feature type="glycosylation site" description="N-linked (GlcNAc...) asparagine" evidence="12 21 22 31 34">
    <location>
        <position position="105"/>
    </location>
</feature>
<feature type="glycosylation site" description="N-linked (GlcNAc...) asparagine" evidence="12 20 21 22 30 31 34">
    <location>
        <position position="174"/>
    </location>
</feature>
<feature type="disulfide bond" evidence="12 20 21 22 30 31 34">
    <location>
        <begin position="161"/>
        <end position="175"/>
    </location>
</feature>
<feature type="splice variant" id="VSP_046676" description="In isoform 4." evidence="24">
    <location>
        <begin position="1"/>
        <end position="85"/>
    </location>
</feature>
<feature type="splice variant" id="VSP_000088" description="In isoform 2." evidence="27">
    <original>MWGLAGGRLFGIFSAPVLVAVVCCAQ</original>
    <variation>MCSGLLELLLPIWLSWTLGTRGSEPR</variation>
    <location>
        <begin position="1"/>
        <end position="26"/>
    </location>
</feature>
<feature type="splice variant" id="VSP_046126" description="In isoform 3." evidence="24">
    <original>GLAGGRLFGIFSAPVLVAVVCCAQSVNDPGNMSFVKETVDKLLKGYDIRLRPDFGGPPVCVGMNIDIASIDMVSEVNM</original>
    <variation>ATYQTEE</variation>
    <location>
        <begin position="3"/>
        <end position="80"/>
    </location>
</feature>
<feature type="sequence variant" id="VAR_047957" description="In ECA5; the mutant protein is hyperglycosylated and has reduced mean current densities compared to wild-type; dbSNP:rs71651682." evidence="8 10">
    <original>G</original>
    <variation>R</variation>
    <location>
        <position position="32"/>
    </location>
</feature>
<feature type="sequence variant" id="VAR_077076" description="In DEE43; no effect on localization to the plasma membrane; decreased GABA-gated chloride ion channel activity; decreased single channel open probability; dbSNP:rs886037938." evidence="11 15 17">
    <original>D</original>
    <variation>N</variation>
    <location>
        <position position="120"/>
    </location>
</feature>
<feature type="sequence variant" id="VAR_078223" description="In DEE43; dbSNP:rs1057519550." evidence="18">
    <original>L</original>
    <variation>F</variation>
    <location>
        <position position="124"/>
    </location>
</feature>
<feature type="sequence variant" id="VAR_078619" description="In DEE43." evidence="13">
    <original>N</original>
    <variation>NH</variation>
    <location>
        <position position="138"/>
    </location>
</feature>
<feature type="sequence variant" id="VAR_077077" description="In DEE43; uncertain significance; dbSNP:rs2140737885." evidence="17">
    <original>T</original>
    <variation>M</variation>
    <location>
        <position position="157"/>
    </location>
</feature>
<feature type="sequence variant" id="VAR_047958" description="In dbSNP:rs17850679." evidence="6">
    <original>Q</original>
    <variation>L</variation>
    <location>
        <position position="173"/>
    </location>
</feature>
<feature type="sequence variant" id="VAR_077078" description="In DEE43; dbSNP:rs886037939." evidence="17">
    <original>Y</original>
    <variation>F</variation>
    <location>
        <position position="182"/>
    </location>
</feature>
<feature type="sequence variant" id="VAR_047959" description="Found in a subject suffering from insomnia; functional analysis reveals a slower rate of the fast phase of desensitization compared with alpha1beta3gamma2S GABA(A) receptors; current deactivation is faster in the mutated receptors; dbSNP:rs121913125." evidence="4">
    <original>R</original>
    <variation>H</variation>
    <location>
        <position position="217"/>
    </location>
</feature>
<feature type="sequence variant" id="VAR_079429" description="Found in patients with Dravet syndrome; uncertain significance; dbSNP:rs797045045." evidence="19">
    <original>R</original>
    <variation>Q</variation>
    <location>
        <position position="232"/>
    </location>
</feature>
<feature type="sequence variant" id="VAR_077079" description="In DEE43; dbSNP:rs886037940." evidence="17">
    <original>Q</original>
    <variation>K</variation>
    <location>
        <position position="249"/>
    </location>
</feature>
<feature type="sequence variant" id="VAR_078224" description="In DEE43; dbSNP:rs1057519549." evidence="18">
    <original>S</original>
    <variation>F</variation>
    <location>
        <position position="254"/>
    </location>
</feature>
<feature type="sequence variant" id="VAR_077080" description="In DEE43; dbSNP:rs1890228169." evidence="17">
    <original>L</original>
    <variation>Q</variation>
    <location>
        <position position="256"/>
    </location>
</feature>
<feature type="sequence variant" id="VAR_078719" description="In DEE43; dbSNP:rs1595440448." evidence="16">
    <original>T</original>
    <variation>I</variation>
    <location>
        <position position="287"/>
    </location>
</feature>
<feature type="sequence variant" id="VAR_077081" description="In DEE43; uncertain significance." evidence="17">
    <original>L</original>
    <variation>H</variation>
    <location>
        <position position="293"/>
    </location>
</feature>
<feature type="sequence variant" id="VAR_077082" description="In DEE43; dbSNP:rs886037941." evidence="17">
    <original>A</original>
    <variation>T</variation>
    <location>
        <position position="305"/>
    </location>
</feature>
<feature type="sequence conflict" description="In Ref. 2; BAH13811." evidence="27" ref="2">
    <original>L</original>
    <variation>H</variation>
    <location>
        <position position="97"/>
    </location>
</feature>
<feature type="sequence conflict" description="In Ref. 2; BAH11997." evidence="27" ref="2">
    <original>W</original>
    <variation>R</variation>
    <location>
        <position position="193"/>
    </location>
</feature>
<feature type="helix" evidence="42">
    <location>
        <begin position="35"/>
        <end position="45"/>
    </location>
</feature>
<feature type="turn" evidence="42">
    <location>
        <begin position="54"/>
        <end position="57"/>
    </location>
</feature>
<feature type="strand" evidence="42">
    <location>
        <begin position="61"/>
        <end position="76"/>
    </location>
</feature>
<feature type="turn" evidence="42">
    <location>
        <begin position="77"/>
        <end position="80"/>
    </location>
</feature>
<feature type="strand" evidence="42">
    <location>
        <begin position="81"/>
        <end position="93"/>
    </location>
</feature>
<feature type="helix" evidence="42">
    <location>
        <begin position="95"/>
        <end position="97"/>
    </location>
</feature>
<feature type="strand" evidence="43">
    <location>
        <begin position="106"/>
        <end position="108"/>
    </location>
</feature>
<feature type="helix" evidence="42">
    <location>
        <begin position="110"/>
        <end position="115"/>
    </location>
</feature>
<feature type="strand" evidence="42">
    <location>
        <begin position="121"/>
        <end position="123"/>
    </location>
</feature>
<feature type="strand" evidence="42">
    <location>
        <begin position="126"/>
        <end position="131"/>
    </location>
</feature>
<feature type="strand" evidence="42">
    <location>
        <begin position="134"/>
        <end position="136"/>
    </location>
</feature>
<feature type="strand" evidence="42">
    <location>
        <begin position="138"/>
        <end position="143"/>
    </location>
</feature>
<feature type="strand" evidence="42">
    <location>
        <begin position="147"/>
        <end position="160"/>
    </location>
</feature>
<feature type="turn" evidence="42">
    <location>
        <begin position="166"/>
        <end position="169"/>
    </location>
</feature>
<feature type="strand" evidence="42">
    <location>
        <begin position="172"/>
        <end position="183"/>
    </location>
</feature>
<feature type="turn" evidence="42">
    <location>
        <begin position="186"/>
        <end position="188"/>
    </location>
</feature>
<feature type="strand" evidence="42">
    <location>
        <begin position="189"/>
        <end position="193"/>
    </location>
</feature>
<feature type="helix" evidence="42">
    <location>
        <begin position="196"/>
        <end position="198"/>
    </location>
</feature>
<feature type="strand" evidence="42">
    <location>
        <begin position="199"/>
        <end position="201"/>
    </location>
</feature>
<feature type="helix" evidence="43">
    <location>
        <begin position="203"/>
        <end position="205"/>
    </location>
</feature>
<feature type="strand" evidence="42">
    <location>
        <begin position="209"/>
        <end position="224"/>
    </location>
</feature>
<feature type="strand" evidence="42">
    <location>
        <begin position="229"/>
        <end position="241"/>
    </location>
</feature>
<feature type="helix" evidence="42">
    <location>
        <begin position="244"/>
        <end position="249"/>
    </location>
</feature>
<feature type="helix" evidence="42">
    <location>
        <begin position="251"/>
        <end position="260"/>
    </location>
</feature>
<feature type="helix" evidence="42">
    <location>
        <begin position="261"/>
        <end position="266"/>
    </location>
</feature>
<feature type="helix" evidence="42">
    <location>
        <begin position="272"/>
        <end position="295"/>
    </location>
</feature>
<feature type="helix" evidence="42">
    <location>
        <begin position="305"/>
        <end position="330"/>
    </location>
</feature>
<feature type="turn" evidence="44">
    <location>
        <begin position="335"/>
        <end position="337"/>
    </location>
</feature>
<feature type="helix" evidence="42">
    <location>
        <begin position="447"/>
        <end position="471"/>
    </location>
</feature>
<feature type="sequence variant" id="VAR_082790" description="In ECA5, the mutant protein is hyperglycosylated and has reduced mean current densities compared to wild-type; dbSNP:rs25409." evidence="8">
    <original>P</original>
    <variation>S</variation>
    <location sequence="P28472-2">
        <position position="11"/>
    </location>
</feature>
<feature type="sequence variant" id="VAR_082791" description="In ECA5, the mutant protein is hyperglycosylated and has reduced mean current densities compared to wild-type; dbSNP:rs121913126." evidence="8">
    <original>S</original>
    <variation>F</variation>
    <location sequence="P28472-2">
        <position position="15"/>
    </location>
</feature>
<evidence type="ECO:0000250" key="1">
    <source>
        <dbReference type="UniProtKB" id="P63079"/>
    </source>
</evidence>
<evidence type="ECO:0000250" key="2">
    <source>
        <dbReference type="UniProtKB" id="P63080"/>
    </source>
</evidence>
<evidence type="ECO:0000255" key="3"/>
<evidence type="ECO:0000269" key="4">
    <source>
    </source>
</evidence>
<evidence type="ECO:0000269" key="5">
    <source>
    </source>
</evidence>
<evidence type="ECO:0000269" key="6">
    <source>
    </source>
</evidence>
<evidence type="ECO:0000269" key="7">
    <source>
    </source>
</evidence>
<evidence type="ECO:0000269" key="8">
    <source>
    </source>
</evidence>
<evidence type="ECO:0000269" key="9">
    <source>
    </source>
</evidence>
<evidence type="ECO:0000269" key="10">
    <source>
    </source>
</evidence>
<evidence type="ECO:0000269" key="11">
    <source>
    </source>
</evidence>
<evidence type="ECO:0000269" key="12">
    <source>
    </source>
</evidence>
<evidence type="ECO:0000269" key="13">
    <source>
    </source>
</evidence>
<evidence type="ECO:0000269" key="14">
    <source>
    </source>
</evidence>
<evidence type="ECO:0000269" key="15">
    <source>
    </source>
</evidence>
<evidence type="ECO:0000269" key="16">
    <source>
    </source>
</evidence>
<evidence type="ECO:0000269" key="17">
    <source>
    </source>
</evidence>
<evidence type="ECO:0000269" key="18">
    <source>
    </source>
</evidence>
<evidence type="ECO:0000269" key="19">
    <source>
    </source>
</evidence>
<evidence type="ECO:0000269" key="20">
    <source>
    </source>
</evidence>
<evidence type="ECO:0000269" key="21">
    <source>
    </source>
</evidence>
<evidence type="ECO:0000269" key="22">
    <source>
    </source>
</evidence>
<evidence type="ECO:0000303" key="23">
    <source>
    </source>
</evidence>
<evidence type="ECO:0000303" key="24">
    <source>
    </source>
</evidence>
<evidence type="ECO:0000303" key="25">
    <source>
    </source>
</evidence>
<evidence type="ECO:0000303" key="26">
    <source>
    </source>
</evidence>
<evidence type="ECO:0000305" key="27"/>
<evidence type="ECO:0000312" key="28">
    <source>
        <dbReference type="HGNC" id="HGNC:4083"/>
    </source>
</evidence>
<evidence type="ECO:0007744" key="29">
    <source>
        <dbReference type="PDB" id="4COF"/>
    </source>
</evidence>
<evidence type="ECO:0007744" key="30">
    <source>
        <dbReference type="PDB" id="6A96"/>
    </source>
</evidence>
<evidence type="ECO:0007744" key="31">
    <source>
        <dbReference type="PDB" id="6I53"/>
    </source>
</evidence>
<evidence type="ECO:0007744" key="32">
    <source>
        <dbReference type="PDB" id="7QN5"/>
    </source>
</evidence>
<evidence type="ECO:0007744" key="33">
    <source>
        <dbReference type="PDB" id="7QN6"/>
    </source>
</evidence>
<evidence type="ECO:0007744" key="34">
    <source>
        <dbReference type="PDB" id="7QN7"/>
    </source>
</evidence>
<evidence type="ECO:0007744" key="35">
    <source>
        <dbReference type="PDB" id="7QN8"/>
    </source>
</evidence>
<evidence type="ECO:0007744" key="36">
    <source>
        <dbReference type="PDB" id="7QN9"/>
    </source>
</evidence>
<evidence type="ECO:0007744" key="37">
    <source>
        <dbReference type="PDB" id="7QNA"/>
    </source>
</evidence>
<evidence type="ECO:0007744" key="38">
    <source>
        <dbReference type="PDB" id="7QNB"/>
    </source>
</evidence>
<evidence type="ECO:0007744" key="39">
    <source>
        <dbReference type="PDB" id="7QNC"/>
    </source>
</evidence>
<evidence type="ECO:0007744" key="40">
    <source>
        <dbReference type="PDB" id="7QND"/>
    </source>
</evidence>
<evidence type="ECO:0007744" key="41">
    <source>
        <dbReference type="PDB" id="7QNE"/>
    </source>
</evidence>
<evidence type="ECO:0007829" key="42">
    <source>
        <dbReference type="PDB" id="6QFA"/>
    </source>
</evidence>
<evidence type="ECO:0007829" key="43">
    <source>
        <dbReference type="PDB" id="7QN5"/>
    </source>
</evidence>
<evidence type="ECO:0007829" key="44">
    <source>
        <dbReference type="PDB" id="7QNE"/>
    </source>
</evidence>